<comment type="function">
    <text evidence="2 4 5 6 7 8 9 10 11 14 20 21 24 27 29 30">Component of the mechanistic target of rapamycin complex 2 (mTORC2), which transduces signals from growth factors to pathways involved in proliferation, cytoskeletal organization, lipogenesis and anabolic output (PubMed:15467718, PubMed:16919458, PubMed:16962653, PubMed:17043309, PubMed:21806543, PubMed:28264193, PubMed:28968999, PubMed:30837283, PubMed:35926713). In response to growth factors, mTORC2 phosphorylates and activates AGC protein kinase family members, including AKT (AKT1, AKT2 and AKT3), PKC (PRKCA, PRKCB and PRKCE) and SGK1 (PubMed:16919458, PubMed:16962653, PubMed:21806543, PubMed:28264193, PubMed:28968999, PubMed:30837283, PubMed:35926713). In contrast to mTORC1, mTORC2 is nutrient-insensitive (PubMed:16962653). Within the mTORC2 complex, MAPKAP1/SIN1 acts as a substrate adapter which recognizes and binds AGC protein kinase family members for phosphorylation by MTOR (PubMed:21806543, PubMed:28264193). mTORC2 plays a critical role in AKT1 activation by mediating phosphorylation of different sites depending on the context, such as 'Thr-450', 'Ser-473', 'Ser-477' or 'Thr-479', facilitating the phosphorylation of the activation loop of AKT1 on 'Thr-308' by PDPK1/PDK1 which is a prerequisite for full activation (PubMed:28264193, PubMed:35926713). mTORC2 catalyzes the phosphorylation of SGK1 at 'Ser-422' and of PRKCA on 'Ser-657' (PubMed:30837283, PubMed:35926713). The mTORC2 complex also phosphorylates various proteins involved in insulin signaling, such as FBXW8 and IGF2BP1 (By similarity). mTORC2 acts upstream of Rho GTPases to regulate the actin cytoskeleton, probably by activating one or more Rho-type guanine nucleotide exchange factors (PubMed:15467718). mTORC2 promotes the serum-induced formation of stress-fibers or F-actin (PubMed:15467718). MAPKAP1 inhibits MAP3K2 by preventing its dimerization and autophosphorylation (PubMed:15988011). Inhibits HRAS and KRAS independently of mTORC2 complex (PubMed:17303383, PubMed:34380736, PubMed:35522713). Enhances osmotic stress-induced phosphorylation of ATF2 and ATF2-mediated transcription (PubMed:17054722). Involved in ciliogenesis, regulates cilia length through its interaction with CCDC28B independently of mTORC2 complex (PubMed:23727834).</text>
</comment>
<comment type="function">
    <molecule>Isoform 4</molecule>
    <text evidence="17">In contrast to isoform 1, isoform 2 and isoform 6, isoform 4 is not a component of the a mTORC2 complex.</text>
</comment>
<comment type="activity regulation">
    <text evidence="18">Phosphatidylinositol 3,4,5-trisphosphate (PI(3,4,5)P3) promotes MTOR activation by relieving MAPKAP1/SIN1-mediated inhibition of MTOR that takes place in absence of PI(3,4,5)P3.</text>
</comment>
<comment type="subunit">
    <text evidence="1 4 5 6 7 9 10 20 22 23 26 27 28 29 30">Component of the mechanistic target of rapamycin complex 2 (mTORC2), consisting in two heterotretramers composed of MTOR, MLST8, RICTOR and MAPKAP1/SIN1 (PubMed:16919458, PubMed:16962653, PubMed:28264193, PubMed:29424687, PubMed:29567957, PubMed:33378666, PubMed:34519268, PubMed:35926713). The mTORC2 core complex associates with PRR5/PROTOR1 and/or PRR5L/PROTOR2 (PubMed:29424687). Contrary to mTORC1, mTORC2 does not bind to and is not sensitive to FKBP12-rapamycin (PubMed:15467718). Interacts with MAP3K2 (PubMed:15988011). Interacts with ATF2 (PubMed:17054722). Interacts with MAPK8 (PubMed:17054722). Interacts with GTP-bound HRAS and KRAS; inhibiting their activity (PubMed:17303383, PubMed:34380736, PubMed:35522713). Interacts with IFNAR2 (By similarity).</text>
</comment>
<comment type="subunit">
    <molecule>Isoform 1</molecule>
    <text evidence="14">Interacts with CCDC28B.</text>
</comment>
<comment type="subunit">
    <molecule>Isoform 2</molecule>
    <text evidence="15">Interacts with NBN.</text>
</comment>
<comment type="interaction">
    <interactant intactId="EBI-749938">
        <id>Q9BPZ7</id>
    </interactant>
    <interactant intactId="EBI-706254">
        <id>Q02156</id>
        <label>PRKCE</label>
    </interactant>
    <organismsDiffer>false</organismsDiffer>
    <experiments>2</experiments>
</comment>
<comment type="interaction">
    <interactant intactId="EBI-749938">
        <id>Q9BPZ7</id>
    </interactant>
    <interactant intactId="EBI-352053">
        <id>P78527</id>
        <label>PRKDC</label>
    </interactant>
    <organismsDiffer>false</organismsDiffer>
    <experiments>2</experiments>
</comment>
<comment type="subcellular location">
    <subcellularLocation>
        <location evidence="10 19">Cell membrane</location>
        <topology evidence="10">Peripheral membrane protein</topology>
    </subcellularLocation>
    <subcellularLocation>
        <location evidence="12">Endoplasmic reticulum membrane</location>
        <topology evidence="10">Peripheral membrane protein</topology>
    </subcellularLocation>
    <subcellularLocation>
        <location evidence="19">Early endosome membrane</location>
        <topology evidence="10">Peripheral membrane protein</topology>
    </subcellularLocation>
    <subcellularLocation>
        <location evidence="19">Late endosome membrane</location>
        <topology evidence="10">Peripheral membrane protein</topology>
    </subcellularLocation>
    <subcellularLocation>
        <location evidence="25">Lysosome membrane</location>
        <topology evidence="10">Peripheral membrane protein</topology>
    </subcellularLocation>
    <subcellularLocation>
        <location evidence="10">Golgi apparatus membrane</location>
        <topology evidence="10">Peripheral membrane protein</topology>
    </subcellularLocation>
    <subcellularLocation>
        <location evidence="19">Mitochondrion outer membrane</location>
        <topology evidence="10">Peripheral membrane protein</topology>
    </subcellularLocation>
    <subcellularLocation>
        <location evidence="24">Cytoplasm</location>
        <location evidence="24">Perinuclear region</location>
    </subcellularLocation>
    <subcellularLocation>
        <location evidence="17">Nucleus</location>
    </subcellularLocation>
    <text evidence="10 12 24 25">The mTORC2 complex localizes to membranes: mTORC2 is active at the plasma membrane, endoplasmic reticulum membrane, lysosomes and perinuclear region (PubMed:17303383, PubMed:21867682, PubMed:30837283). Iin lysosomal membrane, mTORC2 is sensitive to lysosomal positioning in the cell (PubMed:31130364). Following phosphorylation by PKC, localizes to the perinuclear region, where the mTORC2 complexe specifically phosphorylates SGK1, but not AKT (PubMed:30837283).</text>
</comment>
<comment type="subcellular location">
    <molecule>Isoform 1</molecule>
    <subcellularLocation>
        <location evidence="17">Cell membrane</location>
    </subcellularLocation>
    <subcellularLocation>
        <location evidence="17">Nucleus</location>
    </subcellularLocation>
</comment>
<comment type="subcellular location">
    <molecule>Isoform 2</molecule>
    <subcellularLocation>
        <location evidence="17">Cell membrane</location>
    </subcellularLocation>
    <subcellularLocation>
        <location evidence="17">Nucleus</location>
    </subcellularLocation>
</comment>
<comment type="subcellular location">
    <molecule>Isoform 4</molecule>
    <subcellularLocation>
        <location evidence="17">Cell membrane</location>
    </subcellularLocation>
    <subcellularLocation>
        <location evidence="17">Cytoplasm</location>
        <location evidence="17">Cytosol</location>
    </subcellularLocation>
</comment>
<comment type="subcellular location">
    <molecule>Isoform 6</molecule>
    <subcellularLocation>
        <location evidence="17">Cytoplasm</location>
    </subcellularLocation>
    <subcellularLocation>
        <location evidence="17">Nucleus</location>
    </subcellularLocation>
</comment>
<comment type="alternative products">
    <event type="alternative splicing"/>
    <isoform>
        <id>Q9BPZ7-1</id>
        <name>1</name>
        <name evidence="35 38">beta</name>
        <sequence type="displayed"/>
    </isoform>
    <isoform>
        <id>Q9BPZ7-2</id>
        <name>2</name>
        <name evidence="35 38">alpha</name>
        <sequence type="described" ref="VSP_006098"/>
    </isoform>
    <isoform>
        <id>Q9BPZ7-3</id>
        <name>3</name>
        <sequence type="described" ref="VSP_033204"/>
    </isoform>
    <isoform>
        <id>Q9BPZ7-4</id>
        <name>4</name>
        <name evidence="38">delta</name>
        <sequence type="described" ref="VSP_033202"/>
    </isoform>
    <isoform>
        <id>Q9BPZ7-5</id>
        <name>5</name>
        <sequence type="described" ref="VSP_033203 VSP_033207"/>
    </isoform>
    <isoform>
        <id>Q9BPZ7-6</id>
        <name>6</name>
        <name evidence="35 38">gamma</name>
        <sequence type="described" ref="VSP_033205 VSP_033206"/>
    </isoform>
</comment>
<comment type="tissue specificity">
    <text evidence="5">Ubiquitously expressed, with highest levels in heart and skeletal muscle.</text>
</comment>
<comment type="domain">
    <text evidence="20">The CRIM domain forms a ubiquitin-like fold with a characteristic acidic loop, which recognizes and binds AGC protein kinase family members substrates.</text>
</comment>
<comment type="domain">
    <text evidence="30">Arg-83 is required for the phosphorylation of SGK1, but not AKT (AKT1, AKT2 and AKT3): SGK1 promotes a large conformation change of the N-terminus of MAPKAP1/SIN1, promoting formation of a salt-bridge with RICTOR, leading to SGK1 phosphorylation.</text>
</comment>
<comment type="domain">
    <text evidence="18">The SIN1-type PH binds phosphatidylinositol 3,4,5-trisphosphate (PI(3,4,5)P3) (PubMed:26293922). It plays a dual role in mTORC2: in absence of PI(3,4,5)P3, it binds and inactivates MTOR (PubMed:26293922). PI(3,4,5)P3-binding relieves the inhibition, leading to mTORC2 activation (PubMed:26293922).</text>
</comment>
<comment type="PTM">
    <text evidence="2">Phosphorylation at Ser-128 by PKC promotes relocalization to the perinuclear region, where the mTORC2 complex specifically mediates phosphorylation of SGK1 (By similarity). Phosphorylated at Thr-86 by AKT1 or RPS6KB1 in the presence of growth factors; the effect of this phosphorylation is however unclear (By similarity). According to two studies, phosphorylation at Thr-86 by AKT1 is part of a positive feedback loop that increases mTORC2 activation (By similarity). According to another study, phosphorylation at Thr-86 and Thr-398 by RPS6KB1 promotes dissociation from the mTORC2 complex, leading to inhibit mTORC2 signaling (By similarity).</text>
</comment>
<comment type="similarity">
    <text evidence="39">Belongs to the SIN1 family.</text>
</comment>
<gene>
    <name evidence="33 41" type="primary">MAPKAP1</name>
    <name evidence="35" type="synonym">MIP1</name>
    <name evidence="33" type="synonym">SIN1</name>
</gene>
<feature type="initiator methionine" description="Removed" evidence="31">
    <location>
        <position position="1"/>
    </location>
</feature>
<feature type="chain" id="PRO_0000218768" description="Target of rapamycin complex 2 subunit MAPKAP1">
    <location>
        <begin position="2"/>
        <end position="522"/>
    </location>
</feature>
<feature type="domain" description="CRIM" evidence="3 20">
    <location>
        <begin position="139"/>
        <end position="267"/>
    </location>
</feature>
<feature type="domain" description="SIN1-type PH" evidence="3 13">
    <location>
        <begin position="382"/>
        <end position="487"/>
    </location>
</feature>
<feature type="region of interest" description="Interaction with NBN" evidence="15">
    <location>
        <begin position="2"/>
        <end position="267"/>
    </location>
</feature>
<feature type="region of interest" description="Interaction with MAP3K2" evidence="5">
    <location>
        <begin position="2"/>
        <end position="184"/>
    </location>
</feature>
<feature type="region of interest" description="SIN1-type RBD" evidence="3 27">
    <location>
        <begin position="279"/>
        <end position="353"/>
    </location>
</feature>
<feature type="region of interest" description="Interaction with ATF2" evidence="9">
    <location>
        <begin position="468"/>
        <end position="522"/>
    </location>
</feature>
<feature type="binding site" evidence="40">
    <location>
        <position position="393"/>
    </location>
    <ligand>
        <name>a 1,2-diacyl-sn-glycero-3-phospho-(1D-myo-inositol-3,4,5-trisphosphate)</name>
        <dbReference type="ChEBI" id="CHEBI:57836"/>
    </ligand>
</feature>
<feature type="binding site" evidence="40">
    <location>
        <position position="428"/>
    </location>
    <ligand>
        <name>a 1,2-diacyl-sn-glycero-3-phospho-(1D-myo-inositol-3,4,5-trisphosphate)</name>
        <dbReference type="ChEBI" id="CHEBI:57836"/>
    </ligand>
</feature>
<feature type="binding site" evidence="40">
    <location>
        <position position="464"/>
    </location>
    <ligand>
        <name>a 1,2-diacyl-sn-glycero-3-phospho-(1D-myo-inositol-3,4,5-trisphosphate)</name>
        <dbReference type="ChEBI" id="CHEBI:57836"/>
    </ligand>
</feature>
<feature type="modified residue" description="N-acetylalanine" evidence="31">
    <location>
        <position position="2"/>
    </location>
</feature>
<feature type="modified residue" description="Phosphothreonine" evidence="2">
    <location>
        <position position="86"/>
    </location>
</feature>
<feature type="modified residue" description="Phosphoserine" evidence="2">
    <location>
        <position position="128"/>
    </location>
</feature>
<feature type="modified residue" description="Phosphoserine" evidence="57">
    <location>
        <position position="186"/>
    </location>
</feature>
<feature type="modified residue" description="Phosphoserine" evidence="2">
    <location>
        <position position="315"/>
    </location>
</feature>
<feature type="modified residue" description="Phosphoserine" evidence="2">
    <location>
        <position position="356"/>
    </location>
</feature>
<feature type="modified residue" description="Phosphothreonine" evidence="2">
    <location>
        <position position="398"/>
    </location>
</feature>
<feature type="modified residue" description="Phosphoserine" evidence="56">
    <location>
        <position position="510"/>
    </location>
</feature>
<feature type="splice variant" id="VSP_033202" description="In isoform 4." evidence="32 37">
    <location>
        <begin position="1"/>
        <end position="192"/>
    </location>
</feature>
<feature type="splice variant" id="VSP_033203" description="In isoform 5." evidence="33">
    <location>
        <begin position="321"/>
        <end position="438"/>
    </location>
</feature>
<feature type="splice variant" id="VSP_006098" description="In isoform 2." evidence="32 33 34 35">
    <location>
        <begin position="321"/>
        <end position="356"/>
    </location>
</feature>
<feature type="splice variant" id="VSP_033204" description="In isoform 3." evidence="33">
    <location>
        <begin position="357"/>
        <end position="403"/>
    </location>
</feature>
<feature type="splice variant" id="VSP_033205" description="In isoform 6." evidence="35">
    <original>SRADGVFEEDSQIDIA</original>
    <variation>TLAASLHARFVRCKLA</variation>
    <location>
        <begin position="357"/>
        <end position="372"/>
    </location>
</feature>
<feature type="splice variant" id="VSP_033206" description="In isoform 6." evidence="35">
    <location>
        <begin position="373"/>
        <end position="522"/>
    </location>
</feature>
<feature type="splice variant" id="VSP_033207" description="In isoform 5." evidence="33">
    <location>
        <begin position="442"/>
        <end position="522"/>
    </location>
</feature>
<feature type="sequence variant" id="VAR_089978" description="In ovarian cancer; constitutive activation of mTORC2 signaling." evidence="16">
    <original>R</original>
    <variation>T</variation>
    <location>
        <position position="81"/>
    </location>
</feature>
<feature type="mutagenesis site" description="Specifically abolishes ability of the mTORC2 complex to catalyze phosphorylation of SGK1, without affecting AKT1." evidence="30">
    <original>R</original>
    <variation>A</variation>
    <location>
        <position position="83"/>
    </location>
</feature>
<feature type="mutagenesis site" description="Decreased ability of the mTORC2 complex to catalyze phosphorylation of AKT1." evidence="20">
    <original>EDDGEVDTD</original>
    <variation>QNNGQVNTN</variation>
    <location>
        <begin position="236"/>
        <end position="244"/>
    </location>
</feature>
<feature type="mutagenesis site" description="Does not affect interaction with KRAS." evidence="27">
    <original>H</original>
    <variation>A</variation>
    <location>
        <position position="287"/>
    </location>
</feature>
<feature type="mutagenesis site" description="Decreased interaction with KRAS." evidence="27">
    <original>L</original>
    <variation>D</variation>
    <location>
        <position position="291"/>
    </location>
</feature>
<feature type="mutagenesis site" description="Does not affect interaction with KRAS." evidence="27">
    <original>R</original>
    <variation>E</variation>
    <location>
        <position position="311"/>
    </location>
</feature>
<feature type="mutagenesis site" description="Decreased interaction with KRAS." evidence="27">
    <original>R</original>
    <variation>E</variation>
    <location>
        <position position="312"/>
    </location>
</feature>
<feature type="sequence conflict" description="In Ref. 9; AAA36551." evidence="39" ref="9">
    <original>WDFGIRRRSNT</original>
    <variation>ADPARSVEAAS</variation>
    <location>
        <begin position="76"/>
        <end position="86"/>
    </location>
</feature>
<feature type="sequence conflict" description="In Ref. 2; AAT46480/AAT46478/AAT46479." evidence="39" ref="2">
    <original>D</original>
    <variation>N</variation>
    <location>
        <position position="178"/>
    </location>
</feature>
<feature type="sequence conflict" description="In Ref. 3; BAF82749." evidence="39" ref="3">
    <original>L</original>
    <variation>F</variation>
    <location>
        <position position="305"/>
    </location>
</feature>
<feature type="sequence conflict" description="In Ref. 4; CAH56311." evidence="39" ref="4">
    <original>I</original>
    <variation>T</variation>
    <location>
        <position position="478"/>
    </location>
</feature>
<feature type="sequence conflict" description="In Ref. 2; AAT46478/AAT46479." evidence="39" ref="2">
    <original>S</original>
    <variation>N</variation>
    <location>
        <position position="491"/>
    </location>
</feature>
<feature type="sequence conflict" description="In Ref. 9; AAA36551." evidence="39" ref="9">
    <original>Q</original>
    <variation>K</variation>
    <location>
        <position position="502"/>
    </location>
</feature>
<feature type="helix" evidence="59">
    <location>
        <begin position="7"/>
        <end position="20"/>
    </location>
</feature>
<feature type="helix" evidence="59">
    <location>
        <begin position="26"/>
        <end position="30"/>
    </location>
</feature>
<feature type="helix" evidence="61">
    <location>
        <begin position="33"/>
        <end position="35"/>
    </location>
</feature>
<feature type="helix" evidence="62">
    <location>
        <begin position="67"/>
        <end position="71"/>
    </location>
</feature>
<feature type="helix" evidence="59">
    <location>
        <begin position="85"/>
        <end position="100"/>
    </location>
</feature>
<feature type="strand" evidence="59">
    <location>
        <begin position="103"/>
        <end position="106"/>
    </location>
</feature>
<feature type="strand" evidence="62">
    <location>
        <begin position="113"/>
        <end position="115"/>
    </location>
</feature>
<feature type="helix" evidence="59">
    <location>
        <begin position="117"/>
        <end position="123"/>
    </location>
</feature>
<feature type="helix" evidence="59">
    <location>
        <begin position="140"/>
        <end position="145"/>
    </location>
</feature>
<feature type="strand" evidence="63">
    <location>
        <begin position="279"/>
        <end position="285"/>
    </location>
</feature>
<feature type="strand" evidence="63">
    <location>
        <begin position="288"/>
        <end position="296"/>
    </location>
</feature>
<feature type="helix" evidence="63">
    <location>
        <begin position="301"/>
        <end position="313"/>
    </location>
</feature>
<feature type="strand" evidence="63">
    <location>
        <begin position="323"/>
        <end position="327"/>
    </location>
</feature>
<feature type="helix" evidence="63">
    <location>
        <begin position="341"/>
        <end position="344"/>
    </location>
</feature>
<feature type="strand" evidence="63">
    <location>
        <begin position="347"/>
        <end position="353"/>
    </location>
</feature>
<feature type="helix" evidence="60">
    <location>
        <begin position="358"/>
        <end position="360"/>
    </location>
</feature>
<feature type="strand" evidence="60">
    <location>
        <begin position="366"/>
        <end position="368"/>
    </location>
</feature>
<feature type="helix" evidence="58">
    <location>
        <begin position="372"/>
        <end position="378"/>
    </location>
</feature>
<feature type="turn" evidence="58">
    <location>
        <begin position="379"/>
        <end position="381"/>
    </location>
</feature>
<feature type="strand" evidence="58">
    <location>
        <begin position="384"/>
        <end position="392"/>
    </location>
</feature>
<feature type="turn" evidence="58">
    <location>
        <begin position="393"/>
        <end position="395"/>
    </location>
</feature>
<feature type="strand" evidence="58">
    <location>
        <begin position="396"/>
        <end position="404"/>
    </location>
</feature>
<feature type="strand" evidence="58">
    <location>
        <begin position="406"/>
        <end position="413"/>
    </location>
</feature>
<feature type="strand" evidence="58">
    <location>
        <begin position="430"/>
        <end position="433"/>
    </location>
</feature>
<feature type="helix" evidence="58">
    <location>
        <begin position="434"/>
        <end position="436"/>
    </location>
</feature>
<feature type="strand" evidence="58">
    <location>
        <begin position="437"/>
        <end position="445"/>
    </location>
</feature>
<feature type="strand" evidence="58">
    <location>
        <begin position="447"/>
        <end position="449"/>
    </location>
</feature>
<feature type="strand" evidence="58">
    <location>
        <begin position="451"/>
        <end position="459"/>
    </location>
</feature>
<feature type="strand" evidence="58">
    <location>
        <begin position="462"/>
        <end position="470"/>
    </location>
</feature>
<feature type="helix" evidence="58">
    <location>
        <begin position="472"/>
        <end position="487"/>
    </location>
</feature>
<feature type="helix" evidence="60">
    <location>
        <begin position="493"/>
        <end position="499"/>
    </location>
</feature>
<evidence type="ECO:0000250" key="1">
    <source>
        <dbReference type="UniProtKB" id="Q6QD73"/>
    </source>
</evidence>
<evidence type="ECO:0000250" key="2">
    <source>
        <dbReference type="UniProtKB" id="Q8BKH7"/>
    </source>
</evidence>
<evidence type="ECO:0000255" key="3"/>
<evidence type="ECO:0000269" key="4">
    <source>
    </source>
</evidence>
<evidence type="ECO:0000269" key="5">
    <source>
    </source>
</evidence>
<evidence type="ECO:0000269" key="6">
    <source>
    </source>
</evidence>
<evidence type="ECO:0000269" key="7">
    <source>
    </source>
</evidence>
<evidence type="ECO:0000269" key="8">
    <source>
    </source>
</evidence>
<evidence type="ECO:0000269" key="9">
    <source>
    </source>
</evidence>
<evidence type="ECO:0000269" key="10">
    <source>
    </source>
</evidence>
<evidence type="ECO:0000269" key="11">
    <source>
    </source>
</evidence>
<evidence type="ECO:0000269" key="12">
    <source>
    </source>
</evidence>
<evidence type="ECO:0000269" key="13">
    <source>
    </source>
</evidence>
<evidence type="ECO:0000269" key="14">
    <source>
    </source>
</evidence>
<evidence type="ECO:0000269" key="15">
    <source>
    </source>
</evidence>
<evidence type="ECO:0000269" key="16">
    <source>
    </source>
</evidence>
<evidence type="ECO:0000269" key="17">
    <source>
    </source>
</evidence>
<evidence type="ECO:0000269" key="18">
    <source>
    </source>
</evidence>
<evidence type="ECO:0000269" key="19">
    <source>
    </source>
</evidence>
<evidence type="ECO:0000269" key="20">
    <source>
    </source>
</evidence>
<evidence type="ECO:0000269" key="21">
    <source>
    </source>
</evidence>
<evidence type="ECO:0000269" key="22">
    <source>
    </source>
</evidence>
<evidence type="ECO:0000269" key="23">
    <source>
    </source>
</evidence>
<evidence type="ECO:0000269" key="24">
    <source>
    </source>
</evidence>
<evidence type="ECO:0000269" key="25">
    <source>
    </source>
</evidence>
<evidence type="ECO:0000269" key="26">
    <source>
    </source>
</evidence>
<evidence type="ECO:0000269" key="27">
    <source>
    </source>
</evidence>
<evidence type="ECO:0000269" key="28">
    <source>
    </source>
</evidence>
<evidence type="ECO:0000269" key="29">
    <source>
    </source>
</evidence>
<evidence type="ECO:0000269" key="30">
    <source>
    </source>
</evidence>
<evidence type="ECO:0000269" key="31">
    <source ref="8"/>
</evidence>
<evidence type="ECO:0000303" key="32">
    <source>
    </source>
</evidence>
<evidence type="ECO:0000303" key="33">
    <source>
    </source>
</evidence>
<evidence type="ECO:0000303" key="34">
    <source>
    </source>
</evidence>
<evidence type="ECO:0000303" key="35">
    <source>
    </source>
</evidence>
<evidence type="ECO:0000303" key="36">
    <source>
    </source>
</evidence>
<evidence type="ECO:0000303" key="37">
    <source>
    </source>
</evidence>
<evidence type="ECO:0000303" key="38">
    <source>
    </source>
</evidence>
<evidence type="ECO:0000305" key="39"/>
<evidence type="ECO:0000305" key="40">
    <source>
    </source>
</evidence>
<evidence type="ECO:0000312" key="41">
    <source>
        <dbReference type="HGNC" id="HGNC:18752"/>
    </source>
</evidence>
<evidence type="ECO:0007744" key="42">
    <source>
        <dbReference type="PDB" id="3VOQ"/>
    </source>
</evidence>
<evidence type="ECO:0007744" key="43">
    <source>
        <dbReference type="PDB" id="5ZCS"/>
    </source>
</evidence>
<evidence type="ECO:0007744" key="44">
    <source>
        <dbReference type="PDB" id="6ZWM"/>
    </source>
</evidence>
<evidence type="ECO:0007744" key="45">
    <source>
        <dbReference type="PDB" id="6ZWO"/>
    </source>
</evidence>
<evidence type="ECO:0007744" key="46">
    <source>
        <dbReference type="PDB" id="7LC1"/>
    </source>
</evidence>
<evidence type="ECO:0007744" key="47">
    <source>
        <dbReference type="PDB" id="7LC2"/>
    </source>
</evidence>
<evidence type="ECO:0007744" key="48">
    <source>
        <dbReference type="PDB" id="7PE7"/>
    </source>
</evidence>
<evidence type="ECO:0007744" key="49">
    <source>
        <dbReference type="PDB" id="7PE8"/>
    </source>
</evidence>
<evidence type="ECO:0007744" key="50">
    <source>
        <dbReference type="PDB" id="7PE9"/>
    </source>
</evidence>
<evidence type="ECO:0007744" key="51">
    <source>
        <dbReference type="PDB" id="7TZO"/>
    </source>
</evidence>
<evidence type="ECO:0007744" key="52">
    <source>
        <dbReference type="PDB" id="7VV8"/>
    </source>
</evidence>
<evidence type="ECO:0007744" key="53">
    <source>
        <dbReference type="PDB" id="7VV9"/>
    </source>
</evidence>
<evidence type="ECO:0007744" key="54">
    <source>
        <dbReference type="PDB" id="7VVB"/>
    </source>
</evidence>
<evidence type="ECO:0007744" key="55">
    <source>
        <dbReference type="PDB" id="7VVG"/>
    </source>
</evidence>
<evidence type="ECO:0007744" key="56">
    <source>
    </source>
</evidence>
<evidence type="ECO:0007744" key="57">
    <source>
    </source>
</evidence>
<evidence type="ECO:0007829" key="58">
    <source>
        <dbReference type="PDB" id="3VOQ"/>
    </source>
</evidence>
<evidence type="ECO:0007829" key="59">
    <source>
        <dbReference type="PDB" id="6ZWO"/>
    </source>
</evidence>
<evidence type="ECO:0007829" key="60">
    <source>
        <dbReference type="PDB" id="7LC1"/>
    </source>
</evidence>
<evidence type="ECO:0007829" key="61">
    <source>
        <dbReference type="PDB" id="7PE8"/>
    </source>
</evidence>
<evidence type="ECO:0007829" key="62">
    <source>
        <dbReference type="PDB" id="7TZO"/>
    </source>
</evidence>
<evidence type="ECO:0007829" key="63">
    <source>
        <dbReference type="PDB" id="7VV9"/>
    </source>
</evidence>
<protein>
    <recommendedName>
        <fullName evidence="39">Target of rapamycin complex 2 subunit MAPKAP1</fullName>
        <shortName evidence="39">TORC2 subunit MAPKAP1</shortName>
    </recommendedName>
    <alternativeName>
        <fullName evidence="35">Mitogen-activated protein kinase 2-associated protein 1</fullName>
    </alternativeName>
    <alternativeName>
        <fullName evidence="33">Stress-activated map kinase-interacting protein 1</fullName>
        <shortName evidence="33">SAPK-interacting protein 1</shortName>
        <shortName evidence="36">mSIN1</shortName>
    </alternativeName>
</protein>
<organism>
    <name type="scientific">Homo sapiens</name>
    <name type="common">Human</name>
    <dbReference type="NCBI Taxonomy" id="9606"/>
    <lineage>
        <taxon>Eukaryota</taxon>
        <taxon>Metazoa</taxon>
        <taxon>Chordata</taxon>
        <taxon>Craniata</taxon>
        <taxon>Vertebrata</taxon>
        <taxon>Euteleostomi</taxon>
        <taxon>Mammalia</taxon>
        <taxon>Eutheria</taxon>
        <taxon>Euarchontoglires</taxon>
        <taxon>Primates</taxon>
        <taxon>Haplorrhini</taxon>
        <taxon>Catarrhini</taxon>
        <taxon>Hominidae</taxon>
        <taxon>Homo</taxon>
    </lineage>
</organism>
<accession>Q9BPZ7</accession>
<accession>A8K1Z5</accession>
<accession>B1AMA4</accession>
<accession>B7Z309</accession>
<accession>Q00426</accession>
<accession>Q5JSV5</accession>
<accession>Q5JSV6</accession>
<accession>Q5JSV9</accession>
<accession>Q658R0</accession>
<accession>Q699U1</accession>
<accession>Q699U2</accession>
<accession>Q699U3</accession>
<accession>Q699U4</accession>
<accession>Q6GVJ0</accession>
<accession>Q6GVJ1</accession>
<accession>Q6GVJ2</accession>
<reference key="1">
    <citation type="journal article" date="2004" name="Gene">
        <title>Alternative polyadenylation and splicing of mRNAs transcribed from the human Sin1 gene.</title>
        <authorList>
            <person name="Schroder W."/>
            <person name="Cloonan N."/>
            <person name="Bushell G."/>
            <person name="Sculley T."/>
        </authorList>
    </citation>
    <scope>NUCLEOTIDE SEQUENCE [MRNA] (ISOFORMS 1; 2; 3 AND 5)</scope>
</reference>
<reference key="2">
    <citation type="journal article" date="2005" name="Mol. Cell. Biol.">
        <title>Mip1, an MEKK2-interacting protein, controls MEKK2 dimerization and activation.</title>
        <authorList>
            <person name="Cheng J."/>
            <person name="Zhang D."/>
            <person name="Kim K."/>
            <person name="Zhao Y."/>
            <person name="Zhao Y."/>
            <person name="Su B."/>
        </authorList>
    </citation>
    <scope>NUCLEOTIDE SEQUENCE [MRNA] (ISOFORMS 1; 2 AND 6)</scope>
    <scope>TISSUE SPECIFICITY</scope>
    <scope>FUNCTION</scope>
    <scope>INTERACTION WITH MAP3K2</scope>
</reference>
<reference key="3">
    <citation type="journal article" date="2004" name="Nat. Genet.">
        <title>Complete sequencing and characterization of 21,243 full-length human cDNAs.</title>
        <authorList>
            <person name="Ota T."/>
            <person name="Suzuki Y."/>
            <person name="Nishikawa T."/>
            <person name="Otsuki T."/>
            <person name="Sugiyama T."/>
            <person name="Irie R."/>
            <person name="Wakamatsu A."/>
            <person name="Hayashi K."/>
            <person name="Sato H."/>
            <person name="Nagai K."/>
            <person name="Kimura K."/>
            <person name="Makita H."/>
            <person name="Sekine M."/>
            <person name="Obayashi M."/>
            <person name="Nishi T."/>
            <person name="Shibahara T."/>
            <person name="Tanaka T."/>
            <person name="Ishii S."/>
            <person name="Yamamoto J."/>
            <person name="Saito K."/>
            <person name="Kawai Y."/>
            <person name="Isono Y."/>
            <person name="Nakamura Y."/>
            <person name="Nagahari K."/>
            <person name="Murakami K."/>
            <person name="Yasuda T."/>
            <person name="Iwayanagi T."/>
            <person name="Wagatsuma M."/>
            <person name="Shiratori A."/>
            <person name="Sudo H."/>
            <person name="Hosoiri T."/>
            <person name="Kaku Y."/>
            <person name="Kodaira H."/>
            <person name="Kondo H."/>
            <person name="Sugawara M."/>
            <person name="Takahashi M."/>
            <person name="Kanda K."/>
            <person name="Yokoi T."/>
            <person name="Furuya T."/>
            <person name="Kikkawa E."/>
            <person name="Omura Y."/>
            <person name="Abe K."/>
            <person name="Kamihara K."/>
            <person name="Katsuta N."/>
            <person name="Sato K."/>
            <person name="Tanikawa M."/>
            <person name="Yamazaki M."/>
            <person name="Ninomiya K."/>
            <person name="Ishibashi T."/>
            <person name="Yamashita H."/>
            <person name="Murakawa K."/>
            <person name="Fujimori K."/>
            <person name="Tanai H."/>
            <person name="Kimata M."/>
            <person name="Watanabe M."/>
            <person name="Hiraoka S."/>
            <person name="Chiba Y."/>
            <person name="Ishida S."/>
            <person name="Ono Y."/>
            <person name="Takiguchi S."/>
            <person name="Watanabe S."/>
            <person name="Yosida M."/>
            <person name="Hotuta T."/>
            <person name="Kusano J."/>
            <person name="Kanehori K."/>
            <person name="Takahashi-Fujii A."/>
            <person name="Hara H."/>
            <person name="Tanase T.-O."/>
            <person name="Nomura Y."/>
            <person name="Togiya S."/>
            <person name="Komai F."/>
            <person name="Hara R."/>
            <person name="Takeuchi K."/>
            <person name="Arita M."/>
            <person name="Imose N."/>
            <person name="Musashino K."/>
            <person name="Yuuki H."/>
            <person name="Oshima A."/>
            <person name="Sasaki N."/>
            <person name="Aotsuka S."/>
            <person name="Yoshikawa Y."/>
            <person name="Matsunawa H."/>
            <person name="Ichihara T."/>
            <person name="Shiohata N."/>
            <person name="Sano S."/>
            <person name="Moriya S."/>
            <person name="Momiyama H."/>
            <person name="Satoh N."/>
            <person name="Takami S."/>
            <person name="Terashima Y."/>
            <person name="Suzuki O."/>
            <person name="Nakagawa S."/>
            <person name="Senoh A."/>
            <person name="Mizoguchi H."/>
            <person name="Goto Y."/>
            <person name="Shimizu F."/>
            <person name="Wakebe H."/>
            <person name="Hishigaki H."/>
            <person name="Watanabe T."/>
            <person name="Sugiyama A."/>
            <person name="Takemoto M."/>
            <person name="Kawakami B."/>
            <person name="Yamazaki M."/>
            <person name="Watanabe K."/>
            <person name="Kumagai A."/>
            <person name="Itakura S."/>
            <person name="Fukuzumi Y."/>
            <person name="Fujimori Y."/>
            <person name="Komiyama M."/>
            <person name="Tashiro H."/>
            <person name="Tanigami A."/>
            <person name="Fujiwara T."/>
            <person name="Ono T."/>
            <person name="Yamada K."/>
            <person name="Fujii Y."/>
            <person name="Ozaki K."/>
            <person name="Hirao M."/>
            <person name="Ohmori Y."/>
            <person name="Kawabata A."/>
            <person name="Hikiji T."/>
            <person name="Kobatake N."/>
            <person name="Inagaki H."/>
            <person name="Ikema Y."/>
            <person name="Okamoto S."/>
            <person name="Okitani R."/>
            <person name="Kawakami T."/>
            <person name="Noguchi S."/>
            <person name="Itoh T."/>
            <person name="Shigeta K."/>
            <person name="Senba T."/>
            <person name="Matsumura K."/>
            <person name="Nakajima Y."/>
            <person name="Mizuno T."/>
            <person name="Morinaga M."/>
            <person name="Sasaki M."/>
            <person name="Togashi T."/>
            <person name="Oyama M."/>
            <person name="Hata H."/>
            <person name="Watanabe M."/>
            <person name="Komatsu T."/>
            <person name="Mizushima-Sugano J."/>
            <person name="Satoh T."/>
            <person name="Shirai Y."/>
            <person name="Takahashi Y."/>
            <person name="Nakagawa K."/>
            <person name="Okumura K."/>
            <person name="Nagase T."/>
            <person name="Nomura N."/>
            <person name="Kikuchi H."/>
            <person name="Masuho Y."/>
            <person name="Yamashita R."/>
            <person name="Nakai K."/>
            <person name="Yada T."/>
            <person name="Nakamura Y."/>
            <person name="Ohara O."/>
            <person name="Isogai T."/>
            <person name="Sugano S."/>
        </authorList>
    </citation>
    <scope>NUCLEOTIDE SEQUENCE [LARGE SCALE MRNA] (ISOFORMS 2 AND 4)</scope>
    <source>
        <tissue>Corpus callosum</tissue>
        <tissue>Substantia nigra</tissue>
    </source>
</reference>
<reference key="4">
    <citation type="journal article" date="2007" name="BMC Genomics">
        <title>The full-ORF clone resource of the German cDNA consortium.</title>
        <authorList>
            <person name="Bechtel S."/>
            <person name="Rosenfelder H."/>
            <person name="Duda A."/>
            <person name="Schmidt C.P."/>
            <person name="Ernst U."/>
            <person name="Wellenreuther R."/>
            <person name="Mehrle A."/>
            <person name="Schuster C."/>
            <person name="Bahr A."/>
            <person name="Bloecker H."/>
            <person name="Heubner D."/>
            <person name="Hoerlein A."/>
            <person name="Michel G."/>
            <person name="Wedler H."/>
            <person name="Koehrer K."/>
            <person name="Ottenwaelder B."/>
            <person name="Poustka A."/>
            <person name="Wiemann S."/>
            <person name="Schupp I."/>
        </authorList>
    </citation>
    <scope>NUCLEOTIDE SEQUENCE [LARGE SCALE MRNA] (ISOFORM 4)</scope>
    <source>
        <tissue>Stomach</tissue>
    </source>
</reference>
<reference key="5">
    <citation type="journal article" date="2004" name="Nature">
        <title>DNA sequence and analysis of human chromosome 9.</title>
        <authorList>
            <person name="Humphray S.J."/>
            <person name="Oliver K."/>
            <person name="Hunt A.R."/>
            <person name="Plumb R.W."/>
            <person name="Loveland J.E."/>
            <person name="Howe K.L."/>
            <person name="Andrews T.D."/>
            <person name="Searle S."/>
            <person name="Hunt S.E."/>
            <person name="Scott C.E."/>
            <person name="Jones M.C."/>
            <person name="Ainscough R."/>
            <person name="Almeida J.P."/>
            <person name="Ambrose K.D."/>
            <person name="Ashwell R.I.S."/>
            <person name="Babbage A.K."/>
            <person name="Babbage S."/>
            <person name="Bagguley C.L."/>
            <person name="Bailey J."/>
            <person name="Banerjee R."/>
            <person name="Barker D.J."/>
            <person name="Barlow K.F."/>
            <person name="Bates K."/>
            <person name="Beasley H."/>
            <person name="Beasley O."/>
            <person name="Bird C.P."/>
            <person name="Bray-Allen S."/>
            <person name="Brown A.J."/>
            <person name="Brown J.Y."/>
            <person name="Burford D."/>
            <person name="Burrill W."/>
            <person name="Burton J."/>
            <person name="Carder C."/>
            <person name="Carter N.P."/>
            <person name="Chapman J.C."/>
            <person name="Chen Y."/>
            <person name="Clarke G."/>
            <person name="Clark S.Y."/>
            <person name="Clee C.M."/>
            <person name="Clegg S."/>
            <person name="Collier R.E."/>
            <person name="Corby N."/>
            <person name="Crosier M."/>
            <person name="Cummings A.T."/>
            <person name="Davies J."/>
            <person name="Dhami P."/>
            <person name="Dunn M."/>
            <person name="Dutta I."/>
            <person name="Dyer L.W."/>
            <person name="Earthrowl M.E."/>
            <person name="Faulkner L."/>
            <person name="Fleming C.J."/>
            <person name="Frankish A."/>
            <person name="Frankland J.A."/>
            <person name="French L."/>
            <person name="Fricker D.G."/>
            <person name="Garner P."/>
            <person name="Garnett J."/>
            <person name="Ghori J."/>
            <person name="Gilbert J.G.R."/>
            <person name="Glison C."/>
            <person name="Grafham D.V."/>
            <person name="Gribble S."/>
            <person name="Griffiths C."/>
            <person name="Griffiths-Jones S."/>
            <person name="Grocock R."/>
            <person name="Guy J."/>
            <person name="Hall R.E."/>
            <person name="Hammond S."/>
            <person name="Harley J.L."/>
            <person name="Harrison E.S.I."/>
            <person name="Hart E.A."/>
            <person name="Heath P.D."/>
            <person name="Henderson C.D."/>
            <person name="Hopkins B.L."/>
            <person name="Howard P.J."/>
            <person name="Howden P.J."/>
            <person name="Huckle E."/>
            <person name="Johnson C."/>
            <person name="Johnson D."/>
            <person name="Joy A.A."/>
            <person name="Kay M."/>
            <person name="Keenan S."/>
            <person name="Kershaw J.K."/>
            <person name="Kimberley A.M."/>
            <person name="King A."/>
            <person name="Knights A."/>
            <person name="Laird G.K."/>
            <person name="Langford C."/>
            <person name="Lawlor S."/>
            <person name="Leongamornlert D.A."/>
            <person name="Leversha M."/>
            <person name="Lloyd C."/>
            <person name="Lloyd D.M."/>
            <person name="Lovell J."/>
            <person name="Martin S."/>
            <person name="Mashreghi-Mohammadi M."/>
            <person name="Matthews L."/>
            <person name="McLaren S."/>
            <person name="McLay K.E."/>
            <person name="McMurray A."/>
            <person name="Milne S."/>
            <person name="Nickerson T."/>
            <person name="Nisbett J."/>
            <person name="Nordsiek G."/>
            <person name="Pearce A.V."/>
            <person name="Peck A.I."/>
            <person name="Porter K.M."/>
            <person name="Pandian R."/>
            <person name="Pelan S."/>
            <person name="Phillimore B."/>
            <person name="Povey S."/>
            <person name="Ramsey Y."/>
            <person name="Rand V."/>
            <person name="Scharfe M."/>
            <person name="Sehra H.K."/>
            <person name="Shownkeen R."/>
            <person name="Sims S.K."/>
            <person name="Skuce C.D."/>
            <person name="Smith M."/>
            <person name="Steward C.A."/>
            <person name="Swarbreck D."/>
            <person name="Sycamore N."/>
            <person name="Tester J."/>
            <person name="Thorpe A."/>
            <person name="Tracey A."/>
            <person name="Tromans A."/>
            <person name="Thomas D.W."/>
            <person name="Wall M."/>
            <person name="Wallis J.M."/>
            <person name="West A.P."/>
            <person name="Whitehead S.L."/>
            <person name="Willey D.L."/>
            <person name="Williams S.A."/>
            <person name="Wilming L."/>
            <person name="Wray P.W."/>
            <person name="Young L."/>
            <person name="Ashurst J.L."/>
            <person name="Coulson A."/>
            <person name="Blocker H."/>
            <person name="Durbin R.M."/>
            <person name="Sulston J.E."/>
            <person name="Hubbard T."/>
            <person name="Jackson M.J."/>
            <person name="Bentley D.R."/>
            <person name="Beck S."/>
            <person name="Rogers J."/>
            <person name="Dunham I."/>
        </authorList>
    </citation>
    <scope>NUCLEOTIDE SEQUENCE [LARGE SCALE GENOMIC DNA]</scope>
</reference>
<reference key="6">
    <citation type="submission" date="2005-07" db="EMBL/GenBank/DDBJ databases">
        <authorList>
            <person name="Mural R.J."/>
            <person name="Istrail S."/>
            <person name="Sutton G.G."/>
            <person name="Florea L."/>
            <person name="Halpern A.L."/>
            <person name="Mobarry C.M."/>
            <person name="Lippert R."/>
            <person name="Walenz B."/>
            <person name="Shatkay H."/>
            <person name="Dew I."/>
            <person name="Miller J.R."/>
            <person name="Flanigan M.J."/>
            <person name="Edwards N.J."/>
            <person name="Bolanos R."/>
            <person name="Fasulo D."/>
            <person name="Halldorsson B.V."/>
            <person name="Hannenhalli S."/>
            <person name="Turner R."/>
            <person name="Yooseph S."/>
            <person name="Lu F."/>
            <person name="Nusskern D.R."/>
            <person name="Shue B.C."/>
            <person name="Zheng X.H."/>
            <person name="Zhong F."/>
            <person name="Delcher A.L."/>
            <person name="Huson D.H."/>
            <person name="Kravitz S.A."/>
            <person name="Mouchard L."/>
            <person name="Reinert K."/>
            <person name="Remington K.A."/>
            <person name="Clark A.G."/>
            <person name="Waterman M.S."/>
            <person name="Eichler E.E."/>
            <person name="Adams M.D."/>
            <person name="Hunkapiller M.W."/>
            <person name="Myers E.W."/>
            <person name="Venter J.C."/>
        </authorList>
    </citation>
    <scope>NUCLEOTIDE SEQUENCE [LARGE SCALE GENOMIC DNA]</scope>
</reference>
<reference key="7">
    <citation type="journal article" date="2004" name="Genome Res.">
        <title>The status, quality, and expansion of the NIH full-length cDNA project: the Mammalian Gene Collection (MGC).</title>
        <authorList>
            <consortium name="The MGC Project Team"/>
        </authorList>
    </citation>
    <scope>NUCLEOTIDE SEQUENCE [LARGE SCALE MRNA] (ISOFORM 2)</scope>
    <source>
        <tissue>Lung</tissue>
    </source>
</reference>
<reference key="8">
    <citation type="submission" date="2009-03" db="UniProtKB">
        <authorList>
            <person name="Bienvenut W.V."/>
            <person name="Waridel P."/>
            <person name="Quadroni M."/>
        </authorList>
    </citation>
    <scope>PROTEIN SEQUENCE OF 2-15 AND 257-267</scope>
    <scope>CLEAVAGE OF INITIATOR METHIONINE</scope>
    <scope>ACETYLATION AT ALA-2</scope>
    <scope>IDENTIFICATION BY MASS SPECTROMETRY</scope>
    <source>
        <tissue>Embryonic kidney</tissue>
    </source>
</reference>
<reference key="9">
    <citation type="journal article" date="1991" name="Proc. Natl. Acad. Sci. U.S.A.">
        <title>Expression of three mammalian cDNAs that interfere with RAS function in Saccharomyces cerevisiae.</title>
        <authorList>
            <person name="Colicelli J."/>
            <person name="Nicolette C."/>
            <person name="Birchmeier C."/>
            <person name="Rodgers L."/>
            <person name="Riggs M."/>
            <person name="Wigler M."/>
        </authorList>
    </citation>
    <scope>NUCLEOTIDE SEQUENCE [MRNA] OF 76-502 (ISOFORM 1)</scope>
    <source>
        <tissue>Glial cell</tissue>
    </source>
</reference>
<reference key="10">
    <citation type="journal article" date="2004" name="Nat. Cell Biol.">
        <title>Mammalian TOR complex 2 controls the actin cytoskeleton and is rapamycin insensitive.</title>
        <authorList>
            <person name="Jacinto E."/>
            <person name="Loewith R."/>
            <person name="Schmidt A."/>
            <person name="Lin S."/>
            <person name="Ruegg M.A."/>
            <person name="Hall A."/>
            <person name="Hall M.N."/>
        </authorList>
    </citation>
    <scope>FUNCTION</scope>
</reference>
<reference key="11">
    <citation type="journal article" date="2006" name="Cell">
        <title>SIN1/MIP1 maintains rictor-mTOR complex integrity and regulates Akt phosphorylation and substrate specificity.</title>
        <authorList>
            <person name="Jacinto E."/>
            <person name="Facchinetti V."/>
            <person name="Liu D."/>
            <person name="Soto N."/>
            <person name="Wei S."/>
            <person name="Jung S.Y."/>
            <person name="Huang Q."/>
            <person name="Qin J."/>
            <person name="Su B."/>
        </authorList>
    </citation>
    <scope>IDENTIFICATION IN THE TORC2 COMPLEX</scope>
    <scope>FUNCTION</scope>
    <scope>IDENTIFICATION BY MASS SPECTROMETRY</scope>
</reference>
<reference key="12">
    <citation type="journal article" date="2006" name="Curr. Biol.">
        <title>mSin1 is necessary for Akt/PKB phosphorylation, and its isoforms define three distinct mTORC2s.</title>
        <authorList>
            <person name="Frias M.A."/>
            <person name="Thoreen C.C."/>
            <person name="Jaffe J.D."/>
            <person name="Schroder W."/>
            <person name="Sculley T."/>
            <person name="Carr S.A."/>
            <person name="Sabatini D.M."/>
        </authorList>
    </citation>
    <scope>FUNCTION</scope>
    <scope>IDENTIFICATION IN THE TORC2 COMPLEX</scope>
</reference>
<reference key="13">
    <citation type="journal article" date="2006" name="Genes Cells">
        <title>Sin1 binds to both ATF-2 and p38 and enhances ATF-2-dependent transcription in an SAPK signaling pathway.</title>
        <authorList>
            <person name="Makino C."/>
            <person name="Sano Y."/>
            <person name="Shinagawa T."/>
            <person name="Millar J.B."/>
            <person name="Ishii S."/>
        </authorList>
    </citation>
    <scope>INTERACTION WITH ATF2 AND MAPK8</scope>
    <scope>FUNCTION</scope>
</reference>
<reference key="14">
    <citation type="journal article" date="2006" name="Genes Dev.">
        <title>Identification of Sin1 as an essential TORC2 component required for complex formation and kinase activity.</title>
        <authorList>
            <person name="Yang Q."/>
            <person name="Inoki K."/>
            <person name="Ikenoue T."/>
            <person name="Guan K.-L."/>
        </authorList>
    </citation>
    <scope>FUNCTION</scope>
</reference>
<reference key="15">
    <citation type="journal article" date="2007" name="Cell. Signal.">
        <title>Human Sin1 contains Ras-binding and pleckstrin homology domains and suppresses Ras signalling.</title>
        <authorList>
            <person name="Schroder W.A."/>
            <person name="Buck M."/>
            <person name="Cloonan N."/>
            <person name="Hancock J.F."/>
            <person name="Suhrbier A."/>
            <person name="Sculley T."/>
            <person name="Bushell G."/>
        </authorList>
    </citation>
    <scope>INTERACTION WITH HRAS AND KRAS</scope>
    <scope>FUNCTION</scope>
    <scope>SUBCELLULAR LOCATION</scope>
</reference>
<reference key="16">
    <citation type="journal article" date="2008" name="Proc. Natl. Acad. Sci. U.S.A.">
        <title>A quantitative atlas of mitotic phosphorylation.</title>
        <authorList>
            <person name="Dephoure N."/>
            <person name="Zhou C."/>
            <person name="Villen J."/>
            <person name="Beausoleil S.A."/>
            <person name="Bakalarski C.E."/>
            <person name="Elledge S.J."/>
            <person name="Gygi S.P."/>
        </authorList>
    </citation>
    <scope>PHOSPHORYLATION [LARGE SCALE ANALYSIS] AT SER-510</scope>
    <scope>IDENTIFICATION BY MASS SPECTROMETRY [LARGE SCALE ANALYSIS]</scope>
    <source>
        <tissue>Cervix carcinoma</tissue>
    </source>
</reference>
<reference key="17">
    <citation type="journal article" date="2011" name="Biochem. J.">
        <title>mTORC2 targets AGC kinases through Sin1-dependent recruitment.</title>
        <authorList>
            <person name="Cameron A.J."/>
            <person name="Linch M.D."/>
            <person name="Saurin A.T."/>
            <person name="Escribano C."/>
            <person name="Parker P.J."/>
        </authorList>
    </citation>
    <scope>FUNCTION</scope>
</reference>
<reference key="18">
    <citation type="journal article" date="2011" name="Biochem. Biophys. Res. Commun.">
        <title>Endoplasmic reticulum is a main localization site of mTORC2.</title>
        <authorList>
            <person name="Boulbes D.R."/>
            <person name="Shaiken T."/>
            <person name="Sarbassov D.D."/>
        </authorList>
    </citation>
    <scope>SUBCELLULAR LOCATION</scope>
</reference>
<reference key="19">
    <citation type="journal article" date="2013" name="J. Proteome Res.">
        <title>Toward a comprehensive characterization of a human cancer cell phosphoproteome.</title>
        <authorList>
            <person name="Zhou H."/>
            <person name="Di Palma S."/>
            <person name="Preisinger C."/>
            <person name="Peng M."/>
            <person name="Polat A.N."/>
            <person name="Heck A.J."/>
            <person name="Mohammed S."/>
        </authorList>
    </citation>
    <scope>PHOSPHORYLATION [LARGE SCALE ANALYSIS] AT SER-186</scope>
    <scope>IDENTIFICATION BY MASS SPECTROMETRY [LARGE SCALE ANALYSIS]</scope>
    <source>
        <tissue>Cervix carcinoma</tissue>
        <tissue>Erythroleukemia</tissue>
    </source>
</reference>
<reference key="20">
    <citation type="journal article" date="2013" name="PLoS ONE">
        <title>Interaction between NBS1 and the mTOR/Rictor/SIN1 complex through specific domains.</title>
        <authorList>
            <person name="Wang J.Q."/>
            <person name="Chen J.H."/>
            <person name="Chen Y.C."/>
            <person name="Chen M.Y."/>
            <person name="Hsieh C.Y."/>
            <person name="Teng S.C."/>
            <person name="Wu K.J."/>
        </authorList>
    </citation>
    <scope>INTERACTION WITH NBN</scope>
</reference>
<reference key="21">
    <citation type="journal article" date="2013" name="Hum. Mol. Genet.">
        <title>The Bardet-Biedl syndrome-related protein CCDC28B modulates mTORC2 function and interacts with SIN1 to control cilia length independently of the mTOR complex.</title>
        <authorList>
            <person name="Cardenas-Rodriguez M."/>
            <person name="Irigoin F."/>
            <person name="Osborn D.P."/>
            <person name="Gascue C."/>
            <person name="Katsanis N."/>
            <person name="Beales P.L."/>
            <person name="Badano J.L."/>
        </authorList>
    </citation>
    <scope>FUNCTION IN CILIOGENESIS</scope>
    <scope>INTERACTION WITH CCDC28B</scope>
</reference>
<reference key="22">
    <citation type="journal article" date="2013" name="Nat. Cell Biol.">
        <title>Sin1 phosphorylation impairs mTORC2 complex integrity and inhibits downstream Akt signalling to suppress tumorigenesis.</title>
        <authorList>
            <person name="Liu P."/>
            <person name="Gan W."/>
            <person name="Inuzuka H."/>
            <person name="Lazorchak A.S."/>
            <person name="Gao D."/>
            <person name="Arojo O."/>
            <person name="Liu D."/>
            <person name="Wan L."/>
            <person name="Zhai B."/>
            <person name="Yu Y."/>
            <person name="Yuan M."/>
            <person name="Kim B.M."/>
            <person name="Shaik S."/>
            <person name="Menon S."/>
            <person name="Gygi S.P."/>
            <person name="Lee T.H."/>
            <person name="Asara J.M."/>
            <person name="Manning B.D."/>
            <person name="Blenis J."/>
            <person name="Su B."/>
            <person name="Wei W."/>
        </authorList>
    </citation>
    <scope>VARIANT THR-81</scope>
    <scope>CHARACTERIZATION OF VARIANT THR-81</scope>
</reference>
<reference key="23">
    <citation type="journal article" date="2015" name="Cancer Discov.">
        <title>PtdIns(3,4,5)P3-Dependent Activation of the mTORC2 Kinase Complex.</title>
        <authorList>
            <person name="Liu P."/>
            <person name="Gan W."/>
            <person name="Chin Y.R."/>
            <person name="Ogura K."/>
            <person name="Guo J."/>
            <person name="Zhang J."/>
            <person name="Wang B."/>
            <person name="Blenis J."/>
            <person name="Cantley L.C."/>
            <person name="Toker A."/>
            <person name="Su B."/>
            <person name="Wei W."/>
        </authorList>
    </citation>
    <scope>ACTIVITY REGULATION</scope>
    <scope>DOMAIN</scope>
</reference>
<reference key="24">
    <citation type="journal article" date="2015" name="PLoS ONE">
        <title>Characterization of Sin1 Isoforms Reveals an mTOR-Dependent and Independent Function of Sin1gamma.</title>
        <authorList>
            <person name="Yuan Y."/>
            <person name="Pan B."/>
            <person name="Sun H."/>
            <person name="Chen G."/>
            <person name="Su B."/>
            <person name="Huang Y."/>
        </authorList>
    </citation>
    <scope>ALTERNATIVE SPLICING (ISOFORMS 1; 2; 4 AND 6)</scope>
    <scope>SUBCELLULAR LOCATION (ISOFORMS 1; 2; 4 AND 6)</scope>
    <scope>FUNCTION (ISOFORM 4)</scope>
</reference>
<reference key="25">
    <citation type="journal article" date="2017" name="Elife">
        <title>Substrate specificity of TOR complex 2 is determined by a ubiquitin-fold domain of the Sin1 subunit.</title>
        <authorList>
            <person name="Tatebe H."/>
            <person name="Murayama S."/>
            <person name="Yonekura T."/>
            <person name="Hatano T."/>
            <person name="Richter D."/>
            <person name="Furuya T."/>
            <person name="Kataoka S."/>
            <person name="Furuita K."/>
            <person name="Kojima C."/>
            <person name="Shiozaki K."/>
        </authorList>
    </citation>
    <scope>FUNCTION</scope>
    <scope>IDENTIFICATION IN THE MTORC2 COMPLEX</scope>
    <scope>DOMAIN</scope>
    <scope>MUTAGENESIS OF 236-GLU--ASP-244</scope>
</reference>
<reference key="26">
    <citation type="journal article" date="2017" name="J. Cell Biol.">
        <title>Localization of mTORC2 activity inside cells.</title>
        <authorList>
            <person name="Ebner M."/>
            <person name="Sinkovics B."/>
            <person name="Szczygiel M."/>
            <person name="Ribeiro D.W."/>
            <person name="Yudushkin I."/>
        </authorList>
    </citation>
    <scope>SUBCELLULAR LOCATION</scope>
</reference>
<reference key="27">
    <citation type="journal article" date="2017" name="Oncotarget">
        <title>Association of mSin1 with mTORC2 Ras and Akt reveals a crucial domain on mSin1 involved in Akt phosphorylation.</title>
        <authorList>
            <person name="Yao C.A."/>
            <person name="Ortiz-Vega S."/>
            <person name="Sun Y.Y."/>
            <person name="Chien C.T."/>
            <person name="Chuang J.H."/>
            <person name="Lin Y."/>
        </authorList>
    </citation>
    <scope>FUNCTION</scope>
</reference>
<reference key="28">
    <citation type="journal article" date="2019" name="J. Cell Sci.">
        <title>Phosphorylation at distinct subcellular locations underlies specificity in mTORC2-mediated activation of SGK1 and Akt.</title>
        <authorList>
            <person name="Gleason C.E."/>
            <person name="Oses-Prieto J.A."/>
            <person name="Li K.H."/>
            <person name="Saha B."/>
            <person name="Situ G."/>
            <person name="Burlingame A.L."/>
            <person name="Pearce D."/>
        </authorList>
    </citation>
    <scope>FUNCTION</scope>
    <scope>SUBCELLULAR LOCATION</scope>
</reference>
<reference key="29">
    <citation type="journal article" date="2019" name="Mol. Cell">
        <title>Lysosome positioning influences mTORC2 and AKT signaling.</title>
        <authorList>
            <person name="Jia R."/>
            <person name="Bonifacino J.S."/>
        </authorList>
    </citation>
    <scope>SUBCELLULAR LOCATION</scope>
</reference>
<reference key="30">
    <citation type="journal article" date="2020" name="Cell Rep.">
        <title>mTORC2 Assembly Is Regulated by USP9X-Mediated Deubiquitination of RICTOR.</title>
        <authorList>
            <person name="Wrobel L."/>
            <person name="Siddiqi F.H."/>
            <person name="Hill S.M."/>
            <person name="Son S.M."/>
            <person name="Karabiyik C."/>
            <person name="Kim H."/>
            <person name="Rubinsztein D.C."/>
        </authorList>
    </citation>
    <scope>INTERACTION WITH RICTOR</scope>
</reference>
<reference evidence="42" key="31">
    <citation type="journal article" date="2012" name="Acta Crystallogr. F">
        <title>Structures of the pleckstrin homology domain of Saccharomyces cerevisiae Avo1 and its human orthologue Sin1, an essential subunit of TOR complex 2.</title>
        <authorList>
            <person name="Pan D."/>
            <person name="Matsuura Y."/>
        </authorList>
    </citation>
    <scope>X-RAY CRYSTALLOGRAPHY (2.00 ANGSTROMS) OF 372-493</scope>
</reference>
<reference evidence="43" key="32">
    <citation type="journal article" date="2018" name="Cell Res.">
        <title>Cryo-EM structure of human mTOR complex 2.</title>
        <authorList>
            <person name="Chen X."/>
            <person name="Liu M."/>
            <person name="Tian Y."/>
            <person name="Li J."/>
            <person name="Qi Y."/>
            <person name="Zhao D."/>
            <person name="Wu Z."/>
            <person name="Huang M."/>
            <person name="Wong C.C.L."/>
            <person name="Wang H.W."/>
            <person name="Wang J."/>
            <person name="Yang H."/>
            <person name="Xu Y."/>
        </authorList>
    </citation>
    <scope>STRUCTURE BY ELECTRON MICROSCOPY (4.90 ANGSTROMS) OF 141-522</scope>
    <scope>IDENTIFICATION IN THE MTORC2 COMPLEX</scope>
</reference>
<reference key="33">
    <citation type="journal article" date="2018" name="Elife">
        <title>Architecture of the human mTORC2 core complex.</title>
        <authorList>
            <person name="Stuttfeld E."/>
            <person name="Aylett C.H."/>
            <person name="Imseng S."/>
            <person name="Boehringer D."/>
            <person name="Scaiola A."/>
            <person name="Sauer E."/>
            <person name="Hall M.N."/>
            <person name="Maier T."/>
            <person name="Ban N."/>
        </authorList>
    </citation>
    <scope>STRUCTURE BY ELECTRON MICROSCOPY OF THE MTORC2 COMPLEX</scope>
    <scope>IDENTIFICATION IN THE MTORC2 COMPLEX</scope>
</reference>
<reference evidence="44 45" key="34">
    <citation type="journal article" date="2020" name="Sci. Adv.">
        <title>The 3.2-Aa resolution structure of human mTORC2.</title>
        <authorList>
            <person name="Scaiola A."/>
            <person name="Mangia F."/>
            <person name="Imseng S."/>
            <person name="Boehringer D."/>
            <person name="Berneiser K."/>
            <person name="Shimobayashi M."/>
            <person name="Stuttfeld E."/>
            <person name="Hall M.N."/>
            <person name="Ban N."/>
            <person name="Maier T."/>
        </authorList>
    </citation>
    <scope>STRUCTURE BY ELECTRON MICROSCOPY (3.00 ANGSTROMS) OF 2-522</scope>
</reference>
<reference evidence="48 49 50" key="35">
    <citation type="journal article" date="2021" name="Elife">
        <title>Regulation of human mTOR complexes by DEPTOR.</title>
        <authorList>
            <person name="Waelchli M."/>
            <person name="Berneiser K."/>
            <person name="Mangia F."/>
            <person name="Imseng S."/>
            <person name="Craigie L.M."/>
            <person name="Stuttfeld E."/>
            <person name="Hall M.N."/>
            <person name="Maier T."/>
        </authorList>
    </citation>
    <scope>X-RAY CRYSTALLOGRAPHY (1.93 ANGSTROMS) OF 1-230 IN COMPLEX WITH DEPTOR; MLST8; MTOR; RICTOR AND RPTOR</scope>
    <scope>IDENTIFICATION IN THE MTORC2 COMPLEX</scope>
</reference>
<reference evidence="46 47" key="36">
    <citation type="journal article" date="2021" name="Proc. Natl. Acad. Sci. U.S.A.">
        <title>RAS interaction with Sin1 is dispensable for mTORC2 assembly and activity.</title>
        <authorList>
            <person name="Castel P."/>
            <person name="Dharmaiah S."/>
            <person name="Sale M.J."/>
            <person name="Messing S."/>
            <person name="Rizzuto G."/>
            <person name="Cuevas-Navarro A."/>
            <person name="Cheng A."/>
            <person name="Trnka M.J."/>
            <person name="Urisman A."/>
            <person name="Esposito D."/>
            <person name="Simanshu D.K."/>
            <person name="McCormick F."/>
        </authorList>
    </citation>
    <scope>X-RAY CRYSTALLOGRAPHY (2.35 ANGSTROMS) OF 275-510 IN COMPLEX WITH KRAS</scope>
    <scope>FUNCTION</scope>
    <scope>INTERACTION WITH KRAS</scope>
    <scope>MUTAGENESIS OF HIS-287; LEU-291; ARG-311 AND ARG-312</scope>
</reference>
<reference evidence="51" key="37">
    <citation type="journal article" date="2022" name="J. Biol. Chem.">
        <title>Interactions between mTORC2 core subunits Rictor and mSin1 dictate selective and context-dependent phosphorylation of substrate kinases SGK1 and Akt.</title>
        <authorList>
            <person name="Yu Z."/>
            <person name="Chen J."/>
            <person name="Takagi E."/>
            <person name="Wang F."/>
            <person name="Saha B."/>
            <person name="Liu X."/>
            <person name="Joubert L.M."/>
            <person name="Gleason C.E."/>
            <person name="Jin M."/>
            <person name="Li C."/>
            <person name="Nowotny C."/>
            <person name="Agard D."/>
            <person name="Cheng Y."/>
            <person name="Pearce D."/>
        </authorList>
    </citation>
    <scope>STRUCTURE BY ELECTRON MICROSCOPY (3.28 ANGSTROMS) OF THE MTORC2 COMPLEX</scope>
    <scope>FUNCTION</scope>
    <scope>IDENTIFICATION IN THE MTORC2 COMPLEX</scope>
    <scope>MUTAGENESIS OF ARG-83</scope>
</reference>
<reference evidence="52 53 54 55" key="38">
    <citation type="journal article" date="2022" name="Proc. Natl. Acad. Sci. U.S.A.">
        <title>Structural insights into Ras regulation by SIN1.</title>
        <authorList>
            <person name="Zheng Y."/>
            <person name="Ding L."/>
            <person name="Meng X."/>
            <person name="Potter M."/>
            <person name="Kearney A.L."/>
            <person name="Zhang J."/>
            <person name="Sun J."/>
            <person name="James D.E."/>
            <person name="Yang G."/>
            <person name="Zhou C."/>
        </authorList>
    </citation>
    <scope>X-RAY CRYSTALLOGRAPHY (1.60 ANGSTROMS) OF 275-360 IN COMPLEX WITH HRAS AND KRAS</scope>
    <scope>FUNCTION</scope>
    <scope>INTERACTION WITH HRAS AND KRAS</scope>
</reference>
<name>SIN1_HUMAN</name>
<proteinExistence type="evidence at protein level"/>
<dbReference type="EMBL" id="AY524429">
    <property type="protein sequence ID" value="AAS90839.1"/>
    <property type="molecule type" value="mRNA"/>
</dbReference>
<dbReference type="EMBL" id="AY524430">
    <property type="protein sequence ID" value="AAS90840.1"/>
    <property type="molecule type" value="mRNA"/>
</dbReference>
<dbReference type="EMBL" id="AY524431">
    <property type="protein sequence ID" value="AAS90841.1"/>
    <property type="molecule type" value="mRNA"/>
</dbReference>
<dbReference type="EMBL" id="AY524432">
    <property type="protein sequence ID" value="AAS90842.1"/>
    <property type="molecule type" value="mRNA"/>
</dbReference>
<dbReference type="EMBL" id="AY633624">
    <property type="protein sequence ID" value="AAT46478.1"/>
    <property type="molecule type" value="mRNA"/>
</dbReference>
<dbReference type="EMBL" id="AY633625">
    <property type="protein sequence ID" value="AAT46479.1"/>
    <property type="molecule type" value="mRNA"/>
</dbReference>
<dbReference type="EMBL" id="AY633626">
    <property type="protein sequence ID" value="AAT46480.1"/>
    <property type="molecule type" value="mRNA"/>
</dbReference>
<dbReference type="EMBL" id="AK290060">
    <property type="protein sequence ID" value="BAF82749.1"/>
    <property type="molecule type" value="mRNA"/>
</dbReference>
<dbReference type="EMBL" id="AK295364">
    <property type="protein sequence ID" value="BAH12045.1"/>
    <property type="molecule type" value="mRNA"/>
</dbReference>
<dbReference type="EMBL" id="AK316149">
    <property type="protein sequence ID" value="BAH14520.1"/>
    <property type="molecule type" value="mRNA"/>
</dbReference>
<dbReference type="EMBL" id="AL833042">
    <property type="protein sequence ID" value="CAH56311.1"/>
    <property type="molecule type" value="mRNA"/>
</dbReference>
<dbReference type="EMBL" id="AL162584">
    <property type="status" value="NOT_ANNOTATED_CDS"/>
    <property type="molecule type" value="Genomic_DNA"/>
</dbReference>
<dbReference type="EMBL" id="AL359632">
    <property type="status" value="NOT_ANNOTATED_CDS"/>
    <property type="molecule type" value="Genomic_DNA"/>
</dbReference>
<dbReference type="EMBL" id="CH471090">
    <property type="protein sequence ID" value="EAW87630.1"/>
    <property type="molecule type" value="Genomic_DNA"/>
</dbReference>
<dbReference type="EMBL" id="CH471090">
    <property type="protein sequence ID" value="EAW87631.1"/>
    <property type="molecule type" value="Genomic_DNA"/>
</dbReference>
<dbReference type="EMBL" id="CH471090">
    <property type="protein sequence ID" value="EAW87632.1"/>
    <property type="molecule type" value="Genomic_DNA"/>
</dbReference>
<dbReference type="EMBL" id="BC003044">
    <property type="protein sequence ID" value="AAH03044.1"/>
    <property type="molecule type" value="mRNA"/>
</dbReference>
<dbReference type="EMBL" id="BC002326">
    <property type="protein sequence ID" value="AAH02326.1"/>
    <property type="molecule type" value="mRNA"/>
</dbReference>
<dbReference type="EMBL" id="M37191">
    <property type="protein sequence ID" value="AAA36551.1"/>
    <property type="molecule type" value="mRNA"/>
</dbReference>
<dbReference type="CCDS" id="CCDS35139.1">
    <molecule id="Q9BPZ7-3"/>
</dbReference>
<dbReference type="CCDS" id="CCDS35140.1">
    <molecule id="Q9BPZ7-1"/>
</dbReference>
<dbReference type="CCDS" id="CCDS35141.1">
    <molecule id="Q9BPZ7-4"/>
</dbReference>
<dbReference type="CCDS" id="CCDS48020.1">
    <molecule id="Q9BPZ7-5"/>
</dbReference>
<dbReference type="CCDS" id="CCDS6864.1">
    <molecule id="Q9BPZ7-2"/>
</dbReference>
<dbReference type="PIR" id="C38637">
    <property type="entry name" value="C38637"/>
</dbReference>
<dbReference type="RefSeq" id="NP_001006618.1">
    <molecule id="Q9BPZ7-1"/>
    <property type="nucleotide sequence ID" value="NM_001006617.3"/>
</dbReference>
<dbReference type="RefSeq" id="NP_001006619.1">
    <molecule id="Q9BPZ7-5"/>
    <property type="nucleotide sequence ID" value="NM_001006618.2"/>
</dbReference>
<dbReference type="RefSeq" id="NP_001006620.1">
    <molecule id="Q9BPZ7-3"/>
    <property type="nucleotide sequence ID" value="NM_001006619.2"/>
</dbReference>
<dbReference type="RefSeq" id="NP_001006621.1">
    <molecule id="Q9BPZ7-4"/>
    <property type="nucleotide sequence ID" value="NM_001006620.2"/>
</dbReference>
<dbReference type="RefSeq" id="NP_001006622.1">
    <molecule id="Q9BPZ7-4"/>
    <property type="nucleotide sequence ID" value="NM_001006621.2"/>
</dbReference>
<dbReference type="RefSeq" id="NP_077022.1">
    <molecule id="Q9BPZ7-2"/>
    <property type="nucleotide sequence ID" value="NM_024117.4"/>
</dbReference>
<dbReference type="RefSeq" id="XP_011517312.1">
    <property type="nucleotide sequence ID" value="XM_011519010.2"/>
</dbReference>
<dbReference type="RefSeq" id="XP_016870615.1">
    <property type="nucleotide sequence ID" value="XM_017015126.1"/>
</dbReference>
<dbReference type="RefSeq" id="XP_016870616.1">
    <property type="nucleotide sequence ID" value="XM_017015127.1"/>
</dbReference>
<dbReference type="PDB" id="3VOQ">
    <property type="method" value="X-ray"/>
    <property type="resolution" value="2.00 A"/>
    <property type="chains" value="A/B=372-493"/>
</dbReference>
<dbReference type="PDB" id="5ZCS">
    <property type="method" value="EM"/>
    <property type="resolution" value="4.90 A"/>
    <property type="chains" value="G/H=141-522"/>
</dbReference>
<dbReference type="PDB" id="6ZWM">
    <property type="method" value="EM"/>
    <property type="resolution" value="3.20 A"/>
    <property type="chains" value="G/H=1-522"/>
</dbReference>
<dbReference type="PDB" id="6ZWO">
    <property type="method" value="EM"/>
    <property type="resolution" value="3.00 A"/>
    <property type="chains" value="H=2-522"/>
</dbReference>
<dbReference type="PDB" id="7LC1">
    <property type="method" value="X-ray"/>
    <property type="resolution" value="2.35 A"/>
    <property type="chains" value="B/D=275-510"/>
</dbReference>
<dbReference type="PDB" id="7LC2">
    <property type="method" value="X-ray"/>
    <property type="resolution" value="2.70 A"/>
    <property type="chains" value="D/E=275-361"/>
</dbReference>
<dbReference type="PDB" id="7PE7">
    <property type="method" value="EM"/>
    <property type="resolution" value="3.41 A"/>
    <property type="chains" value="G/H=1-522"/>
</dbReference>
<dbReference type="PDB" id="7PE8">
    <property type="method" value="EM"/>
    <property type="resolution" value="3.20 A"/>
    <property type="chains" value="G=1-522"/>
</dbReference>
<dbReference type="PDB" id="7PE9">
    <property type="method" value="EM"/>
    <property type="resolution" value="3.70 A"/>
    <property type="chains" value="G=1-522"/>
</dbReference>
<dbReference type="PDB" id="7TZO">
    <property type="method" value="EM"/>
    <property type="resolution" value="3.28 A"/>
    <property type="chains" value="G/H=1-522"/>
</dbReference>
<dbReference type="PDB" id="7VV8">
    <property type="method" value="X-ray"/>
    <property type="resolution" value="1.70 A"/>
    <property type="chains" value="C=274-360"/>
</dbReference>
<dbReference type="PDB" id="7VV9">
    <property type="method" value="X-ray"/>
    <property type="resolution" value="1.60 A"/>
    <property type="chains" value="C=275-360"/>
</dbReference>
<dbReference type="PDB" id="7VVB">
    <property type="method" value="X-ray"/>
    <property type="resolution" value="1.70 A"/>
    <property type="chains" value="B=1-522"/>
</dbReference>
<dbReference type="PDB" id="7VVG">
    <property type="method" value="X-ray"/>
    <property type="resolution" value="1.70 A"/>
    <property type="chains" value="C=274-360"/>
</dbReference>
<dbReference type="PDBsum" id="3VOQ"/>
<dbReference type="PDBsum" id="5ZCS"/>
<dbReference type="PDBsum" id="6ZWM"/>
<dbReference type="PDBsum" id="6ZWO"/>
<dbReference type="PDBsum" id="7LC1"/>
<dbReference type="PDBsum" id="7LC2"/>
<dbReference type="PDBsum" id="7PE7"/>
<dbReference type="PDBsum" id="7PE8"/>
<dbReference type="PDBsum" id="7PE9"/>
<dbReference type="PDBsum" id="7TZO"/>
<dbReference type="PDBsum" id="7VV8"/>
<dbReference type="PDBsum" id="7VV9"/>
<dbReference type="PDBsum" id="7VVB"/>
<dbReference type="PDBsum" id="7VVG"/>
<dbReference type="EMDB" id="EMD-11488"/>
<dbReference type="EMDB" id="EMD-11489"/>
<dbReference type="EMDB" id="EMD-11490"/>
<dbReference type="EMDB" id="EMD-11491"/>
<dbReference type="EMDB" id="EMD-11492"/>
<dbReference type="EMDB" id="EMD-13347"/>
<dbReference type="EMDB" id="EMD-13348"/>
<dbReference type="EMDB" id="EMD-13349"/>
<dbReference type="EMDB" id="EMD-26213"/>
<dbReference type="EMDB" id="EMD-6913"/>
<dbReference type="SMR" id="Q9BPZ7"/>
<dbReference type="BioGRID" id="122551">
    <property type="interactions" value="154"/>
</dbReference>
<dbReference type="ComplexPortal" id="CPX-4402">
    <property type="entry name" value="mTORC2 complex"/>
</dbReference>
<dbReference type="CORUM" id="Q9BPZ7"/>
<dbReference type="DIP" id="DIP-39480N"/>
<dbReference type="FunCoup" id="Q9BPZ7">
    <property type="interactions" value="4062"/>
</dbReference>
<dbReference type="IntAct" id="Q9BPZ7">
    <property type="interactions" value="46"/>
</dbReference>
<dbReference type="MINT" id="Q9BPZ7"/>
<dbReference type="STRING" id="9606.ENSP00000265960"/>
<dbReference type="BindingDB" id="Q9BPZ7"/>
<dbReference type="ChEMBL" id="CHEMBL4523999"/>
<dbReference type="DrugBank" id="DB13062">
    <property type="generic name" value="ME-344"/>
</dbReference>
<dbReference type="DrugBank" id="DB12812">
    <property type="generic name" value="Palomid 529"/>
</dbReference>
<dbReference type="DrugBank" id="DB11925">
    <property type="generic name" value="Vistusertib"/>
</dbReference>
<dbReference type="DrugBank" id="DB12986">
    <property type="generic name" value="VS-5584"/>
</dbReference>
<dbReference type="GlyGen" id="Q9BPZ7">
    <property type="glycosylation" value="2 sites, 1 O-linked glycan (2 sites)"/>
</dbReference>
<dbReference type="iPTMnet" id="Q9BPZ7"/>
<dbReference type="PhosphoSitePlus" id="Q9BPZ7"/>
<dbReference type="SwissPalm" id="Q9BPZ7"/>
<dbReference type="BioMuta" id="MAPKAP1"/>
<dbReference type="DMDM" id="15214282"/>
<dbReference type="jPOST" id="Q9BPZ7"/>
<dbReference type="MassIVE" id="Q9BPZ7"/>
<dbReference type="PaxDb" id="9606-ENSP00000265960"/>
<dbReference type="PeptideAtlas" id="Q9BPZ7"/>
<dbReference type="ProteomicsDB" id="78599">
    <molecule id="Q9BPZ7-1"/>
</dbReference>
<dbReference type="ProteomicsDB" id="78600">
    <molecule id="Q9BPZ7-2"/>
</dbReference>
<dbReference type="ProteomicsDB" id="78601">
    <molecule id="Q9BPZ7-3"/>
</dbReference>
<dbReference type="ProteomicsDB" id="78602">
    <molecule id="Q9BPZ7-4"/>
</dbReference>
<dbReference type="ProteomicsDB" id="78603">
    <molecule id="Q9BPZ7-5"/>
</dbReference>
<dbReference type="ProteomicsDB" id="78604">
    <molecule id="Q9BPZ7-6"/>
</dbReference>
<dbReference type="Pumba" id="Q9BPZ7"/>
<dbReference type="Antibodypedia" id="30572">
    <property type="antibodies" value="318 antibodies from 39 providers"/>
</dbReference>
<dbReference type="DNASU" id="79109"/>
<dbReference type="Ensembl" id="ENST00000265960.8">
    <molecule id="Q9BPZ7-1"/>
    <property type="protein sequence ID" value="ENSP00000265960.3"/>
    <property type="gene ID" value="ENSG00000119487.17"/>
</dbReference>
<dbReference type="Ensembl" id="ENST00000350766.7">
    <molecule id="Q9BPZ7-2"/>
    <property type="protein sequence ID" value="ENSP00000265961.5"/>
    <property type="gene ID" value="ENSG00000119487.17"/>
</dbReference>
<dbReference type="Ensembl" id="ENST00000373498.5">
    <molecule id="Q9BPZ7-1"/>
    <property type="protein sequence ID" value="ENSP00000362597.1"/>
    <property type="gene ID" value="ENSG00000119487.17"/>
</dbReference>
<dbReference type="Ensembl" id="ENST00000373503.7">
    <molecule id="Q9BPZ7-4"/>
    <property type="protein sequence ID" value="ENSP00000362602.3"/>
    <property type="gene ID" value="ENSG00000119487.17"/>
</dbReference>
<dbReference type="Ensembl" id="ENST00000373511.6">
    <molecule id="Q9BPZ7-3"/>
    <property type="protein sequence ID" value="ENSP00000362610.2"/>
    <property type="gene ID" value="ENSG00000119487.17"/>
</dbReference>
<dbReference type="Ensembl" id="ENST00000394060.7">
    <molecule id="Q9BPZ7-5"/>
    <property type="protein sequence ID" value="ENSP00000377624.3"/>
    <property type="gene ID" value="ENSG00000119487.17"/>
</dbReference>
<dbReference type="Ensembl" id="ENST00000394063.5">
    <molecule id="Q9BPZ7-4"/>
    <property type="protein sequence ID" value="ENSP00000377627.1"/>
    <property type="gene ID" value="ENSG00000119487.17"/>
</dbReference>
<dbReference type="GeneID" id="79109"/>
<dbReference type="KEGG" id="hsa:79109"/>
<dbReference type="MANE-Select" id="ENST00000265960.8">
    <property type="protein sequence ID" value="ENSP00000265960.3"/>
    <property type="RefSeq nucleotide sequence ID" value="NM_001006617.3"/>
    <property type="RefSeq protein sequence ID" value="NP_001006618.1"/>
</dbReference>
<dbReference type="UCSC" id="uc004bpv.3">
    <molecule id="Q9BPZ7-1"/>
    <property type="organism name" value="human"/>
</dbReference>
<dbReference type="AGR" id="HGNC:18752"/>
<dbReference type="CTD" id="79109"/>
<dbReference type="DisGeNET" id="79109"/>
<dbReference type="GeneCards" id="MAPKAP1"/>
<dbReference type="HGNC" id="HGNC:18752">
    <property type="gene designation" value="MAPKAP1"/>
</dbReference>
<dbReference type="HPA" id="ENSG00000119487">
    <property type="expression patterns" value="Low tissue specificity"/>
</dbReference>
<dbReference type="MIM" id="610558">
    <property type="type" value="gene"/>
</dbReference>
<dbReference type="neXtProt" id="NX_Q9BPZ7"/>
<dbReference type="OpenTargets" id="ENSG00000119487"/>
<dbReference type="PharmGKB" id="PA38674"/>
<dbReference type="VEuPathDB" id="HostDB:ENSG00000119487"/>
<dbReference type="eggNOG" id="KOG3739">
    <property type="taxonomic scope" value="Eukaryota"/>
</dbReference>
<dbReference type="GeneTree" id="ENSGT00390000000642"/>
<dbReference type="HOGENOM" id="CLU_514767_0_0_1"/>
<dbReference type="InParanoid" id="Q9BPZ7"/>
<dbReference type="OMA" id="NAKFWPQ"/>
<dbReference type="OrthoDB" id="241990at2759"/>
<dbReference type="PAN-GO" id="Q9BPZ7">
    <property type="GO annotations" value="5 GO annotations based on evolutionary models"/>
</dbReference>
<dbReference type="PhylomeDB" id="Q9BPZ7"/>
<dbReference type="TreeFam" id="TF315174"/>
<dbReference type="PathwayCommons" id="Q9BPZ7"/>
<dbReference type="Reactome" id="R-HSA-1257604">
    <property type="pathway name" value="PIP3 activates AKT signaling"/>
</dbReference>
<dbReference type="Reactome" id="R-HSA-389357">
    <property type="pathway name" value="CD28 dependent PI3K/Akt signaling"/>
</dbReference>
<dbReference type="Reactome" id="R-HSA-5218920">
    <property type="pathway name" value="VEGFR2 mediated vascular permeability"/>
</dbReference>
<dbReference type="Reactome" id="R-HSA-5674400">
    <property type="pathway name" value="Constitutive Signaling by AKT1 E17K in Cancer"/>
</dbReference>
<dbReference type="Reactome" id="R-HSA-6804757">
    <property type="pathway name" value="Regulation of TP53 Degradation"/>
</dbReference>
<dbReference type="Reactome" id="R-HSA-9856530">
    <property type="pathway name" value="High laminar flow shear stress activates signaling by PIEZO1 and PECAM1:CDH5:KDR in endothelial cells"/>
</dbReference>
<dbReference type="SignaLink" id="Q9BPZ7"/>
<dbReference type="SIGNOR" id="Q9BPZ7"/>
<dbReference type="BioGRID-ORCS" id="79109">
    <property type="hits" value="163 hits in 1187 CRISPR screens"/>
</dbReference>
<dbReference type="ChiTaRS" id="MAPKAP1">
    <property type="organism name" value="human"/>
</dbReference>
<dbReference type="EvolutionaryTrace" id="Q9BPZ7"/>
<dbReference type="GeneWiki" id="MAPKAP1"/>
<dbReference type="GenomeRNAi" id="79109"/>
<dbReference type="Pharos" id="Q9BPZ7">
    <property type="development level" value="Tbio"/>
</dbReference>
<dbReference type="PRO" id="PR:Q9BPZ7"/>
<dbReference type="Proteomes" id="UP000005640">
    <property type="component" value="Chromosome 9"/>
</dbReference>
<dbReference type="RNAct" id="Q9BPZ7">
    <property type="molecule type" value="protein"/>
</dbReference>
<dbReference type="Bgee" id="ENSG00000119487">
    <property type="expression patterns" value="Expressed in hindlimb stylopod muscle and 197 other cell types or tissues"/>
</dbReference>
<dbReference type="ExpressionAtlas" id="Q9BPZ7">
    <property type="expression patterns" value="baseline and differential"/>
</dbReference>
<dbReference type="GO" id="GO:0005929">
    <property type="term" value="C:cilium"/>
    <property type="evidence" value="ECO:0000314"/>
    <property type="project" value="HPA"/>
</dbReference>
<dbReference type="GO" id="GO:0005737">
    <property type="term" value="C:cytoplasm"/>
    <property type="evidence" value="ECO:0000314"/>
    <property type="project" value="UniProtKB"/>
</dbReference>
<dbReference type="GO" id="GO:0005829">
    <property type="term" value="C:cytosol"/>
    <property type="evidence" value="ECO:0000314"/>
    <property type="project" value="HPA"/>
</dbReference>
<dbReference type="GO" id="GO:0005769">
    <property type="term" value="C:early endosome"/>
    <property type="evidence" value="ECO:0000314"/>
    <property type="project" value="UniProtKB"/>
</dbReference>
<dbReference type="GO" id="GO:0031901">
    <property type="term" value="C:early endosome membrane"/>
    <property type="evidence" value="ECO:0007669"/>
    <property type="project" value="UniProtKB-SubCell"/>
</dbReference>
<dbReference type="GO" id="GO:0005783">
    <property type="term" value="C:endoplasmic reticulum"/>
    <property type="evidence" value="ECO:0000314"/>
    <property type="project" value="UniProtKB"/>
</dbReference>
<dbReference type="GO" id="GO:0005789">
    <property type="term" value="C:endoplasmic reticulum membrane"/>
    <property type="evidence" value="ECO:0007669"/>
    <property type="project" value="UniProtKB-SubCell"/>
</dbReference>
<dbReference type="GO" id="GO:0005794">
    <property type="term" value="C:Golgi apparatus"/>
    <property type="evidence" value="ECO:0000314"/>
    <property type="project" value="UniProtKB"/>
</dbReference>
<dbReference type="GO" id="GO:0000139">
    <property type="term" value="C:Golgi membrane"/>
    <property type="evidence" value="ECO:0007669"/>
    <property type="project" value="UniProtKB-SubCell"/>
</dbReference>
<dbReference type="GO" id="GO:0043231">
    <property type="term" value="C:intracellular membrane-bounded organelle"/>
    <property type="evidence" value="ECO:0000314"/>
    <property type="project" value="HPA"/>
</dbReference>
<dbReference type="GO" id="GO:0005770">
    <property type="term" value="C:late endosome"/>
    <property type="evidence" value="ECO:0000314"/>
    <property type="project" value="UniProtKB"/>
</dbReference>
<dbReference type="GO" id="GO:0031902">
    <property type="term" value="C:late endosome membrane"/>
    <property type="evidence" value="ECO:0007669"/>
    <property type="project" value="UniProtKB-SubCell"/>
</dbReference>
<dbReference type="GO" id="GO:0005765">
    <property type="term" value="C:lysosomal membrane"/>
    <property type="evidence" value="ECO:0007669"/>
    <property type="project" value="UniProtKB-SubCell"/>
</dbReference>
<dbReference type="GO" id="GO:0005764">
    <property type="term" value="C:lysosome"/>
    <property type="evidence" value="ECO:0000314"/>
    <property type="project" value="UniProtKB"/>
</dbReference>
<dbReference type="GO" id="GO:0005741">
    <property type="term" value="C:mitochondrial outer membrane"/>
    <property type="evidence" value="ECO:0000314"/>
    <property type="project" value="UniProtKB"/>
</dbReference>
<dbReference type="GO" id="GO:0005654">
    <property type="term" value="C:nucleoplasm"/>
    <property type="evidence" value="ECO:0000314"/>
    <property type="project" value="HPA"/>
</dbReference>
<dbReference type="GO" id="GO:0005634">
    <property type="term" value="C:nucleus"/>
    <property type="evidence" value="ECO:0000314"/>
    <property type="project" value="UniProtKB"/>
</dbReference>
<dbReference type="GO" id="GO:0048471">
    <property type="term" value="C:perinuclear region of cytoplasm"/>
    <property type="evidence" value="ECO:0007669"/>
    <property type="project" value="UniProtKB-SubCell"/>
</dbReference>
<dbReference type="GO" id="GO:0005886">
    <property type="term" value="C:plasma membrane"/>
    <property type="evidence" value="ECO:0000314"/>
    <property type="project" value="UniProtKB"/>
</dbReference>
<dbReference type="GO" id="GO:1902554">
    <property type="term" value="C:serine/threonine protein kinase complex"/>
    <property type="evidence" value="ECO:0000314"/>
    <property type="project" value="UniProt"/>
</dbReference>
<dbReference type="GO" id="GO:0031932">
    <property type="term" value="C:TORC2 complex"/>
    <property type="evidence" value="ECO:0000314"/>
    <property type="project" value="UniProtKB"/>
</dbReference>
<dbReference type="GO" id="GO:0140767">
    <property type="term" value="F:enzyme-substrate adaptor activity"/>
    <property type="evidence" value="ECO:0000314"/>
    <property type="project" value="UniProtKB"/>
</dbReference>
<dbReference type="GO" id="GO:0060090">
    <property type="term" value="F:molecular adaptor activity"/>
    <property type="evidence" value="ECO:0000314"/>
    <property type="project" value="DisProt"/>
</dbReference>
<dbReference type="GO" id="GO:0070300">
    <property type="term" value="F:phosphatidic acid binding"/>
    <property type="evidence" value="ECO:0000314"/>
    <property type="project" value="UniProtKB"/>
</dbReference>
<dbReference type="GO" id="GO:0005547">
    <property type="term" value="F:phosphatidylinositol-3,4,5-trisphosphate binding"/>
    <property type="evidence" value="ECO:0000314"/>
    <property type="project" value="UniProtKB"/>
</dbReference>
<dbReference type="GO" id="GO:0043325">
    <property type="term" value="F:phosphatidylinositol-3,4-bisphosphate binding"/>
    <property type="evidence" value="ECO:0000314"/>
    <property type="project" value="UniProtKB"/>
</dbReference>
<dbReference type="GO" id="GO:0080025">
    <property type="term" value="F:phosphatidylinositol-3,5-bisphosphate binding"/>
    <property type="evidence" value="ECO:0000314"/>
    <property type="project" value="UniProtKB"/>
</dbReference>
<dbReference type="GO" id="GO:0005546">
    <property type="term" value="F:phosphatidylinositol-4,5-bisphosphate binding"/>
    <property type="evidence" value="ECO:0000314"/>
    <property type="project" value="UniProtKB"/>
</dbReference>
<dbReference type="GO" id="GO:0019901">
    <property type="term" value="F:protein kinase binding"/>
    <property type="evidence" value="ECO:0000353"/>
    <property type="project" value="ParkinsonsUK-UCL"/>
</dbReference>
<dbReference type="GO" id="GO:0031267">
    <property type="term" value="F:small GTPase binding"/>
    <property type="evidence" value="ECO:0000314"/>
    <property type="project" value="UniProtKB"/>
</dbReference>
<dbReference type="GO" id="GO:0032869">
    <property type="term" value="P:cellular response to insulin stimulus"/>
    <property type="evidence" value="ECO:0000250"/>
    <property type="project" value="UniProtKB"/>
</dbReference>
<dbReference type="GO" id="GO:0031669">
    <property type="term" value="P:cellular response to nutrient levels"/>
    <property type="evidence" value="ECO:0000303"/>
    <property type="project" value="ComplexPortal"/>
</dbReference>
<dbReference type="GO" id="GO:0007010">
    <property type="term" value="P:cytoskeleton organization"/>
    <property type="evidence" value="ECO:0000303"/>
    <property type="project" value="ComplexPortal"/>
</dbReference>
<dbReference type="GO" id="GO:0043066">
    <property type="term" value="P:negative regulation of apoptotic process"/>
    <property type="evidence" value="ECO:0000303"/>
    <property type="project" value="ComplexPortal"/>
</dbReference>
<dbReference type="GO" id="GO:0046627">
    <property type="term" value="P:negative regulation of insulin receptor signaling pathway"/>
    <property type="evidence" value="ECO:0000250"/>
    <property type="project" value="UniProt"/>
</dbReference>
<dbReference type="GO" id="GO:0046580">
    <property type="term" value="P:negative regulation of Ras protein signal transduction"/>
    <property type="evidence" value="ECO:0000315"/>
    <property type="project" value="UniProtKB"/>
</dbReference>
<dbReference type="GO" id="GO:0030307">
    <property type="term" value="P:positive regulation of cell growth"/>
    <property type="evidence" value="ECO:0000303"/>
    <property type="project" value="ComplexPortal"/>
</dbReference>
<dbReference type="GO" id="GO:1900407">
    <property type="term" value="P:regulation of cellular response to oxidative stress"/>
    <property type="evidence" value="ECO:0007669"/>
    <property type="project" value="Ensembl"/>
</dbReference>
<dbReference type="GO" id="GO:0021762">
    <property type="term" value="P:substantia nigra development"/>
    <property type="evidence" value="ECO:0007007"/>
    <property type="project" value="UniProtKB"/>
</dbReference>
<dbReference type="GO" id="GO:0038203">
    <property type="term" value="P:TORC2 signaling"/>
    <property type="evidence" value="ECO:0000314"/>
    <property type="project" value="UniProtKB"/>
</dbReference>
<dbReference type="CDD" id="cd13331">
    <property type="entry name" value="PH_Avo1"/>
    <property type="match status" value="1"/>
</dbReference>
<dbReference type="DisProt" id="DP02693"/>
<dbReference type="FunFam" id="2.30.29.30:FF:000585">
    <property type="entry name" value="target of rapamycin complex 2 subunit MAPKAP1 isoform X3"/>
    <property type="match status" value="1"/>
</dbReference>
<dbReference type="Gene3D" id="2.30.29.30">
    <property type="entry name" value="Pleckstrin-homology domain (PH domain)/Phosphotyrosine-binding domain (PTB)"/>
    <property type="match status" value="1"/>
</dbReference>
<dbReference type="InterPro" id="IPR031567">
    <property type="entry name" value="CRIM_dom"/>
</dbReference>
<dbReference type="InterPro" id="IPR011993">
    <property type="entry name" value="PH-like_dom_sf"/>
</dbReference>
<dbReference type="InterPro" id="IPR008828">
    <property type="entry name" value="Sin1/Avo1"/>
</dbReference>
<dbReference type="InterPro" id="IPR032679">
    <property type="entry name" value="Sin1_N"/>
</dbReference>
<dbReference type="InterPro" id="IPR031313">
    <property type="entry name" value="Sin1_PH_dom"/>
</dbReference>
<dbReference type="PANTHER" id="PTHR13335">
    <property type="entry name" value="TARGET OF RAPAMYCIN COMPLEX 2 SUBUNIT MAPKAP1"/>
    <property type="match status" value="1"/>
</dbReference>
<dbReference type="PANTHER" id="PTHR13335:SF1">
    <property type="entry name" value="TARGET OF RAPAMYCIN COMPLEX 2 SUBUNIT MAPKAP1"/>
    <property type="match status" value="1"/>
</dbReference>
<dbReference type="Pfam" id="PF16978">
    <property type="entry name" value="CRIM"/>
    <property type="match status" value="1"/>
</dbReference>
<dbReference type="Pfam" id="PF05422">
    <property type="entry name" value="SIN1"/>
    <property type="match status" value="1"/>
</dbReference>
<dbReference type="Pfam" id="PF16979">
    <property type="entry name" value="SIN1_PH"/>
    <property type="match status" value="1"/>
</dbReference>
<sequence length="522" mass="59123">MAFLDNPTIILAHIRQSHVTSDDTGMCEMVLIDHDVDLEKIHPPSMPGDSGSEIQGSNGETQGYVYAQSVDITSSWDFGIRRRSNTAQRLERLRKERQNQIKCKNIQWKERNSKQSAQELKSLFEKKSLKEKPPISGKQSILSVRLEQCPLQLNNPFNEYSKFDGKGHVGTTATKKIDVYLPLHSSQDRLLPMTVVTMASARVQDLIGLICWQYTSEGREPKLNDNVSAYCLHIAEDDGEVDTDFPPLDSNEPIHKFGFSTLALVEKYSSPGLTSKESLFVRINAAHGFSLIQVDNTKVTMKEILLKAVKRRKGSQKVSGPQYRLEKQSEPNVAVDLDSTLESQSAWEFCLVRENSSRADGVFEEDSQIDIATVQDMLSSHHYKSFKVSMIHRLRFTTDVQLGISGDKVEIDPVTNQKASTKFWIKQKPISIDSDLLCACDLAEEKSPSHAIFKLTYLSNHDYKHLYFESDAATVNEIVLKVNYILESRASTARADYFAQKQRKLNRRTSFSFQKEKKSGQQ</sequence>
<keyword id="KW-0002">3D-structure</keyword>
<keyword id="KW-0007">Acetylation</keyword>
<keyword id="KW-0025">Alternative splicing</keyword>
<keyword id="KW-1003">Cell membrane</keyword>
<keyword id="KW-0963">Cytoplasm</keyword>
<keyword id="KW-0903">Direct protein sequencing</keyword>
<keyword id="KW-0256">Endoplasmic reticulum</keyword>
<keyword id="KW-0967">Endosome</keyword>
<keyword id="KW-0333">Golgi apparatus</keyword>
<keyword id="KW-0458">Lysosome</keyword>
<keyword id="KW-0472">Membrane</keyword>
<keyword id="KW-0496">Mitochondrion</keyword>
<keyword id="KW-1000">Mitochondrion outer membrane</keyword>
<keyword id="KW-0539">Nucleus</keyword>
<keyword id="KW-0597">Phosphoprotein</keyword>
<keyword id="KW-1267">Proteomics identification</keyword>
<keyword id="KW-1185">Reference proteome</keyword>
<keyword id="KW-0346">Stress response</keyword>